<gene>
    <name type="primary">SHC1</name>
    <name type="synonym">SHC</name>
    <name type="synonym">SHCA</name>
</gene>
<comment type="function">
    <text evidence="1 13">Signaling adapter that couples activated growth factor receptors to signaling pathways. Participates in a signaling cascade initiated by activated KIT and KITLG/SCF. Isoform p46Shc and isoform p52Shc, once phosphorylated, couple activated receptor tyrosine kinases to Ras via the recruitment of the GRB2/SOS complex and are implicated in the cytoplasmic propagation of mitogenic signals. Isoform p46Shc and isoform p52Shc may thus function as initiators of the Ras signaling cascade in various non-neuronal systems. Isoform p66Shc does not mediate Ras activation, but is involved in signal transduction pathways that regulate the cellular response to oxidative stress and life span. Isoform p66Shc acts as a downstream target of the tumor suppressor p53 and is indispensable for the ability of stress-activated p53 to induce elevation of intracellular oxidants, cytochrome c release and apoptosis. The expression of isoform p66Shc has been correlated with life span (By similarity). Participates in signaling downstream of the angiopoietin receptor TEK/TIE2, and plays a role in the regulation of endothelial cell migration and sprouting angiogenesis.</text>
</comment>
<comment type="subunit">
    <text evidence="2 3 7 8 9 10 11 13 14 15 16 17 20 21 22 23 25 26 27 28 29 30 31 32 34 35 38 39 41">Interacts with CPNE3; this interaction may mediate the binding of CPNE3 with ERBB2 (PubMed:20010870). Interacts with the NPXY motif of tyrosine-phosphorylated IGF1R and INSR in vitro via the PID domain. Once activated, binds to GRB2. Interacts with tyrosine-phosphorylated CD3T and DDR2. Interacts with the N-terminal region of SH2B2. Interacts with phosphorylated LRP1 and IRS4. Interacts with INPP5D/SHIP1 and INPPL1/SHIP2. Interacts with TRIM31. Interacts with PTPN6/SHP (tyrosine phosphorylated). Identified in a complex containing FGFR4, NCAM1, CDH2, PLCG1, FRS2, SRC, SHC1, GAP43 and CTT (By similarity). Interacts with ALK, GAB2, GRB7 and KIT. Interacts with FLT4 (tyrosine-phosphorylated). Interacts with EPHB1 and GRB2; activates the MAPK/ERK cascade to regulate cell migration. Interacts with PDGFRB (tyrosine-phosphorylated). Interacts with ERBB4. Interacts with TEK/TIE2 (tyrosine-phosphorylated). Interacts with the Trk receptors NTRK1, NTRK2 and NTRK3; in a phosphotyrosine-dependent manner. Interacts with PTK2/FAK1. Interacts with CEACAM1; this interaction is CEACAM1-phosphorylation-dependent and mediates interaction with EGFR or INSR resulting in decrease coupling of SHC1 to the MAPK3/ERK1-MAPK1/ERK2 pathway (By similarity). Interacts (via PID domain) with PEAK1 (when phosphorylated at 'Tyr-1188') (PubMed:23846654, PubMed:35687021). Found in a complex with PPP1CA, PPP1CC, SHC1 and PEAK1 (PubMed:23846654).</text>
</comment>
<comment type="subunit">
    <text evidence="24">(Microbial infection) Interacts with herpes simplex virus 1 UL46.</text>
</comment>
<comment type="interaction">
    <interactant intactId="EBI-78835">
        <id>P29353</id>
    </interactant>
    <interactant intactId="EBI-77613">
        <id>P05067</id>
        <label>APP</label>
    </interactant>
    <organismsDiffer>false</organismsDiffer>
    <experiments>5</experiments>
</comment>
<comment type="interaction">
    <interactant intactId="EBI-78835">
        <id>P29353</id>
    </interactant>
    <interactant intactId="EBI-608057">
        <id>P10275</id>
        <label>AR</label>
    </interactant>
    <organismsDiffer>false</organismsDiffer>
    <experiments>14</experiments>
</comment>
<comment type="interaction">
    <interactant intactId="EBI-78835">
        <id>P29353</id>
    </interactant>
    <interactant intactId="EBI-739580">
        <id>Q13137</id>
        <label>CALCOCO2</label>
    </interactant>
    <organismsDiffer>false</organismsDiffer>
    <experiments>3</experiments>
</comment>
<comment type="interaction">
    <interactant intactId="EBI-78835">
        <id>P29353</id>
    </interactant>
    <interactant intactId="EBI-349854">
        <id>P13569</id>
        <label>CFTR</label>
    </interactant>
    <organismsDiffer>false</organismsDiffer>
    <experiments>6</experiments>
</comment>
<comment type="interaction">
    <interactant intactId="EBI-78835">
        <id>P29353</id>
    </interactant>
    <interactant intactId="EBI-297353">
        <id>P00533</id>
        <label>EGFR</label>
    </interactant>
    <organismsDiffer>false</organismsDiffer>
    <experiments>37</experiments>
</comment>
<comment type="interaction">
    <interactant intactId="EBI-78835">
        <id>P29353</id>
    </interactant>
    <interactant intactId="EBI-641062">
        <id>P04626</id>
        <label>ERBB2</label>
    </interactant>
    <organismsDiffer>false</organismsDiffer>
    <experiments>11</experiments>
</comment>
<comment type="interaction">
    <interactant intactId="EBI-78835">
        <id>P29353</id>
    </interactant>
    <interactant intactId="EBI-720706">
        <id>P21860</id>
        <label>ERBB3</label>
    </interactant>
    <organismsDiffer>false</organismsDiffer>
    <experiments>6</experiments>
</comment>
<comment type="interaction">
    <interactant intactId="EBI-78835">
        <id>P29353</id>
    </interactant>
    <interactant intactId="EBI-80371">
        <id>Q15303</id>
        <label>ERBB4</label>
    </interactant>
    <organismsDiffer>false</organismsDiffer>
    <experiments>2</experiments>
</comment>
<comment type="interaction">
    <interactant intactId="EBI-78835">
        <id>P29353</id>
    </interactant>
    <interactant intactId="EBI-4309277">
        <id>P03372-4</id>
        <label>ESR1</label>
    </interactant>
    <organismsDiffer>false</organismsDiffer>
    <experiments>2</experiments>
</comment>
<comment type="interaction">
    <interactant intactId="EBI-78835">
        <id>P29353</id>
    </interactant>
    <interactant intactId="EBI-517684">
        <id>Q13480</id>
        <label>GAB1</label>
    </interactant>
    <organismsDiffer>false</organismsDiffer>
    <experiments>9</experiments>
</comment>
<comment type="interaction">
    <interactant intactId="EBI-78835">
        <id>P29353</id>
    </interactant>
    <interactant intactId="EBI-401755">
        <id>P62993</id>
        <label>GRB2</label>
    </interactant>
    <organismsDiffer>false</organismsDiffer>
    <experiments>30</experiments>
</comment>
<comment type="interaction">
    <interactant intactId="EBI-78835">
        <id>P29353</id>
    </interactant>
    <interactant intactId="EBI-475899">
        <id>P06213</id>
        <label>INSR</label>
    </interactant>
    <organismsDiffer>false</organismsDiffer>
    <experiments>2</experiments>
</comment>
<comment type="interaction">
    <interactant intactId="EBI-78835">
        <id>P29353</id>
    </interactant>
    <interactant intactId="EBI-1379503">
        <id>P10721</id>
        <label>KIT</label>
    </interactant>
    <organismsDiffer>false</organismsDiffer>
    <experiments>8</experiments>
</comment>
<comment type="interaction">
    <interactant intactId="EBI-78835">
        <id>P29353</id>
    </interactant>
    <interactant intactId="EBI-1039152">
        <id>P08581</id>
        <label>MET</label>
    </interactant>
    <organismsDiffer>false</organismsDiffer>
    <experiments>5</experiments>
</comment>
<comment type="interaction">
    <interactant intactId="EBI-78835">
        <id>P29353</id>
    </interactant>
    <interactant intactId="EBI-2266035">
        <id>Q05209</id>
        <label>PTPN12</label>
    </interactant>
    <organismsDiffer>false</organismsDiffer>
    <experiments>9</experiments>
</comment>
<comment type="interaction">
    <interactant intactId="EBI-78835">
        <id>P29353</id>
    </interactant>
    <interactant intactId="EBI-297487">
        <id>Q07889</id>
        <label>SOS1</label>
    </interactant>
    <organismsDiffer>false</organismsDiffer>
    <experiments>2</experiments>
</comment>
<comment type="interaction">
    <interactant intactId="EBI-78835">
        <id>P29353</id>
    </interactant>
    <interactant intactId="EBI-646604">
        <id>Q62120</id>
        <label>Jak2</label>
    </interactant>
    <organismsDiffer>true</organismsDiffer>
    <experiments>2</experiments>
</comment>
<comment type="interaction">
    <interactant intactId="EBI-78835">
        <id>P29353</id>
    </interactant>
    <interactant intactId="EBI-2548993">
        <id>P03495</id>
        <label>NS</label>
    </interactant>
    <organismsDiffer>true</organismsDiffer>
    <experiments>2</experiments>
</comment>
<comment type="interaction">
    <interactant intactId="EBI-8160716">
        <id>P29353-1</id>
    </interactant>
    <interactant intactId="EBI-401755">
        <id>P62993</id>
        <label>GRB2</label>
    </interactant>
    <organismsDiffer>false</organismsDiffer>
    <experiments>3</experiments>
</comment>
<comment type="interaction">
    <interactant intactId="EBI-1000553">
        <id>P29353-2</id>
    </interactant>
    <interactant intactId="EBI-475981">
        <id>P08069</id>
        <label>IGF1R</label>
    </interactant>
    <organismsDiffer>false</organismsDiffer>
    <experiments>2</experiments>
</comment>
<comment type="interaction">
    <interactant intactId="EBI-1000553">
        <id>P29353-2</id>
    </interactant>
    <interactant intactId="EBI-959949">
        <id>P28482</id>
        <label>MAPK1</label>
    </interactant>
    <organismsDiffer>false</organismsDiffer>
    <experiments>4</experiments>
</comment>
<comment type="interaction">
    <interactant intactId="EBI-9691288">
        <id>P29353-7</id>
    </interactant>
    <interactant intactId="EBI-1383687">
        <id>Q9UQM7</id>
        <label>CAMK2A</label>
    </interactant>
    <organismsDiffer>false</organismsDiffer>
    <experiments>3</experiments>
</comment>
<comment type="interaction">
    <interactant intactId="EBI-9691288">
        <id>P29353-7</id>
    </interactant>
    <interactant intactId="EBI-297353">
        <id>P00533</id>
        <label>EGFR</label>
    </interactant>
    <organismsDiffer>false</organismsDiffer>
    <experiments>4</experiments>
</comment>
<comment type="interaction">
    <interactant intactId="EBI-9691288">
        <id>P29353-7</id>
    </interactant>
    <interactant intactId="EBI-25892332">
        <id>P43405-2</id>
        <label>SYK</label>
    </interactant>
    <organismsDiffer>false</organismsDiffer>
    <experiments>3</experiments>
</comment>
<comment type="subcellular location">
    <subcellularLocation>
        <location>Cytoplasm</location>
    </subcellularLocation>
    <subcellularLocation>
        <location evidence="25">Cell junction</location>
        <location evidence="25">Focal adhesion</location>
    </subcellularLocation>
</comment>
<comment type="subcellular location">
    <molecule>Isoform p46Shc</molecule>
    <subcellularLocation>
        <location evidence="12">Mitochondrion matrix</location>
    </subcellularLocation>
    <text>Localized to the mitochondria matrix. Targeting of isoform p46Shc to mitochondria is mediated by its first 32 amino acids, which behave as a bona fide mitochondrial targeting sequence. Isoform p52Shc and isoform p66Shc, that contain the same sequence but more internally located, display a different subcellular localization.</text>
</comment>
<comment type="subcellular location">
    <molecule>Isoform p66Shc</molecule>
    <subcellularLocation>
        <location evidence="1">Mitochondrion</location>
    </subcellularLocation>
    <text evidence="1">In case of oxidative conditions, phosphorylation at 'Ser-36' of isoform p66Shc, leads to mitochondrial accumulation.</text>
</comment>
<comment type="alternative products">
    <event type="alternative promoter"/>
    <event type="alternative splicing"/>
    <isoform>
        <id>P29353-1</id>
        <name>p66Shc</name>
        <sequence type="displayed"/>
    </isoform>
    <isoform>
        <id>P29353-2</id>
        <name>p52Shc</name>
        <sequence type="described" ref="VSP_016108"/>
    </isoform>
    <isoform>
        <id>P29353-3</id>
        <name>p46Shc</name>
        <sequence type="described" ref="VSP_016107"/>
    </isoform>
    <isoform>
        <id>P29353-5</id>
        <name>5</name>
        <sequence type="described" ref="VSP_040090 VSP_040091"/>
    </isoform>
    <isoform>
        <id>P29353-6</id>
        <name>6</name>
        <sequence type="described" ref="VSP_040092"/>
    </isoform>
    <isoform>
        <id>P29353-7</id>
        <name>7</name>
        <sequence type="described" ref="VSP_016108 VSP_040092"/>
    </isoform>
</comment>
<comment type="tissue specificity">
    <text>Widely expressed. Expressed in neural stem cells but absent in mature neurons.</text>
</comment>
<comment type="domain">
    <text evidence="1">In response to a variety of growth factors, isoform p46Shc and isoform p52Shc bind to phosphorylated Trk receptors through their phosphotyrosine binding (PID) and/or SH2 domains. The PID and SH2 domains bind to specific phosphorylated tyrosine residues in the Asn-Pro-Xaa-Tyr(P) motif of the Trk receptors. Isoform p46Shc and isoform p52Shc are in turn phosphorylated on three tyrosine residues within the extended proline-rich domain. These phosphotyrosines act as docking site for GRB2 and thereby are involved in Ras activation (By similarity).</text>
</comment>
<comment type="PTM">
    <text evidence="1 10 13 18 19 20 31 33 36 37 39 40">Phosphorylated by activated epidermal growth factor receptor. Phosphorylated in response to FLT4 and KIT signaling. Isoform p46Shc and isoform p52Shc are phosphorylated on tyrosine residues of the Pro-rich domain. Isoform p66Shc is phosphorylated on Ser-36 by PRKCB upon treatment with insulin, hydrogen peroxide or irradiation with ultraviolet light (By similarity). Tyrosine phosphorylated in response to FLT3 signaling (By similarity). Tyrosine phosphorylated by activated PTK2B/PYK2 (By similarity). Tyrosine phosphorylated by ligand-activated ALK. Tyrosine phosphorylated by ligand-activated PDGFRB. Tyrosine phosphorylated by TEK/TIE2. May be tyrosine phosphorylated by activated PTK2/FAK1; tyrosine phosphorylation was seen in an astrocytoma biopsy, where PTK2/FAK1 kinase activity is high, but not in normal brain tissue. Isoform p52Shc dephosphorylation by PTPN2 may regulate interaction with GRB2.</text>
</comment>
<comment type="miscellaneous">
    <molecule>Isoform p66Shc</molecule>
    <text>Regulated by epigenetic modifications of its promoter region.</text>
</comment>
<comment type="miscellaneous">
    <molecule>Isoform 5</molecule>
    <text evidence="46">Produced by alternative splicing.</text>
</comment>
<comment type="miscellaneous">
    <molecule>Isoform 6</molecule>
    <text evidence="46">Produced by alternative splicing.</text>
</comment>
<comment type="miscellaneous">
    <molecule>Isoform 7</molecule>
    <text evidence="46">Produced by alternative splicing.</text>
</comment>
<comment type="online information" name="Atlas of Genetics and Cytogenetics in Oncology and Haematology">
    <link uri="https://atlasgeneticsoncology.org/gene/42287/SHC1"/>
</comment>
<proteinExistence type="evidence at protein level"/>
<keyword id="KW-0002">3D-structure</keyword>
<keyword id="KW-0007">Acetylation</keyword>
<keyword id="KW-0877">Alternative promoter usage</keyword>
<keyword id="KW-0025">Alternative splicing</keyword>
<keyword id="KW-0037">Angiogenesis</keyword>
<keyword id="KW-0965">Cell junction</keyword>
<keyword id="KW-0963">Cytoplasm</keyword>
<keyword id="KW-0341">Growth regulation</keyword>
<keyword id="KW-0945">Host-virus interaction</keyword>
<keyword id="KW-0496">Mitochondrion</keyword>
<keyword id="KW-0597">Phosphoprotein</keyword>
<keyword id="KW-1267">Proteomics identification</keyword>
<keyword id="KW-1185">Reference proteome</keyword>
<keyword id="KW-0727">SH2 domain</keyword>
<accession>P29353</accession>
<accession>B5BU19</accession>
<accession>D3DV78</accession>
<accession>O15290</accession>
<accession>Q5T180</accession>
<accession>Q5T183</accession>
<accession>Q5T184</accession>
<accession>Q5T185</accession>
<accession>Q5T186</accession>
<accession>Q8N4K5</accession>
<accession>Q96CL1</accession>
<evidence type="ECO:0000250" key="1"/>
<evidence type="ECO:0000250" key="2">
    <source>
        <dbReference type="UniProtKB" id="P98083"/>
    </source>
</evidence>
<evidence type="ECO:0000250" key="3">
    <source>
        <dbReference type="UniProtKB" id="Q5M824"/>
    </source>
</evidence>
<evidence type="ECO:0000255" key="4">
    <source>
        <dbReference type="PROSITE-ProRule" id="PRU00148"/>
    </source>
</evidence>
<evidence type="ECO:0000255" key="5">
    <source>
        <dbReference type="PROSITE-ProRule" id="PRU00191"/>
    </source>
</evidence>
<evidence type="ECO:0000256" key="6">
    <source>
        <dbReference type="SAM" id="MobiDB-lite"/>
    </source>
</evidence>
<evidence type="ECO:0000269" key="7">
    <source>
    </source>
</evidence>
<evidence type="ECO:0000269" key="8">
    <source>
    </source>
</evidence>
<evidence type="ECO:0000269" key="9">
    <source>
    </source>
</evidence>
<evidence type="ECO:0000269" key="10">
    <source>
    </source>
</evidence>
<evidence type="ECO:0000269" key="11">
    <source>
    </source>
</evidence>
<evidence type="ECO:0000269" key="12">
    <source>
    </source>
</evidence>
<evidence type="ECO:0000269" key="13">
    <source>
    </source>
</evidence>
<evidence type="ECO:0000269" key="14">
    <source>
    </source>
</evidence>
<evidence type="ECO:0000269" key="15">
    <source>
    </source>
</evidence>
<evidence type="ECO:0000269" key="16">
    <source>
    </source>
</evidence>
<evidence type="ECO:0000269" key="17">
    <source>
    </source>
</evidence>
<evidence type="ECO:0000269" key="18">
    <source>
    </source>
</evidence>
<evidence type="ECO:0000269" key="19">
    <source>
    </source>
</evidence>
<evidence type="ECO:0000269" key="20">
    <source>
    </source>
</evidence>
<evidence type="ECO:0000269" key="21">
    <source>
    </source>
</evidence>
<evidence type="ECO:0000269" key="22">
    <source>
    </source>
</evidence>
<evidence type="ECO:0000269" key="23">
    <source>
    </source>
</evidence>
<evidence type="ECO:0000269" key="24">
    <source>
    </source>
</evidence>
<evidence type="ECO:0000269" key="25">
    <source>
    </source>
</evidence>
<evidence type="ECO:0000269" key="26">
    <source>
    </source>
</evidence>
<evidence type="ECO:0000269" key="27">
    <source>
    </source>
</evidence>
<evidence type="ECO:0000269" key="28">
    <source>
    </source>
</evidence>
<evidence type="ECO:0000269" key="29">
    <source>
    </source>
</evidence>
<evidence type="ECO:0000269" key="30">
    <source>
    </source>
</evidence>
<evidence type="ECO:0000269" key="31">
    <source>
    </source>
</evidence>
<evidence type="ECO:0000269" key="32">
    <source>
    </source>
</evidence>
<evidence type="ECO:0000269" key="33">
    <source>
    </source>
</evidence>
<evidence type="ECO:0000269" key="34">
    <source>
    </source>
</evidence>
<evidence type="ECO:0000269" key="35">
    <source>
    </source>
</evidence>
<evidence type="ECO:0000269" key="36">
    <source>
    </source>
</evidence>
<evidence type="ECO:0000269" key="37">
    <source>
    </source>
</evidence>
<evidence type="ECO:0000269" key="38">
    <source>
    </source>
</evidence>
<evidence type="ECO:0000269" key="39">
    <source>
    </source>
</evidence>
<evidence type="ECO:0000269" key="40">
    <source>
    </source>
</evidence>
<evidence type="ECO:0000269" key="41">
    <source>
    </source>
</evidence>
<evidence type="ECO:0000303" key="42">
    <source>
    </source>
</evidence>
<evidence type="ECO:0000303" key="43">
    <source>
    </source>
</evidence>
<evidence type="ECO:0000303" key="44">
    <source>
    </source>
</evidence>
<evidence type="ECO:0000303" key="45">
    <source>
    </source>
</evidence>
<evidence type="ECO:0000305" key="46"/>
<evidence type="ECO:0007744" key="47">
    <source>
    </source>
</evidence>
<evidence type="ECO:0007744" key="48">
    <source>
    </source>
</evidence>
<evidence type="ECO:0007744" key="49">
    <source>
    </source>
</evidence>
<evidence type="ECO:0007744" key="50">
    <source>
    </source>
</evidence>
<evidence type="ECO:0007744" key="51">
    <source>
    </source>
</evidence>
<evidence type="ECO:0007744" key="52">
    <source>
    </source>
</evidence>
<evidence type="ECO:0007744" key="53">
    <source>
    </source>
</evidence>
<evidence type="ECO:0007829" key="54">
    <source>
        <dbReference type="PDB" id="1MIL"/>
    </source>
</evidence>
<evidence type="ECO:0007829" key="55">
    <source>
        <dbReference type="PDB" id="1N3H"/>
    </source>
</evidence>
<evidence type="ECO:0007829" key="56">
    <source>
        <dbReference type="PDB" id="1OY2"/>
    </source>
</evidence>
<evidence type="ECO:0007829" key="57">
    <source>
        <dbReference type="PDB" id="1SHC"/>
    </source>
</evidence>
<evidence type="ECO:0007829" key="58">
    <source>
        <dbReference type="PDB" id="1TCE"/>
    </source>
</evidence>
<evidence type="ECO:0007829" key="59">
    <source>
        <dbReference type="PDB" id="4XWX"/>
    </source>
</evidence>
<evidence type="ECO:0007829" key="60">
    <source>
        <dbReference type="PDB" id="5CZI"/>
    </source>
</evidence>
<organism>
    <name type="scientific">Homo sapiens</name>
    <name type="common">Human</name>
    <dbReference type="NCBI Taxonomy" id="9606"/>
    <lineage>
        <taxon>Eukaryota</taxon>
        <taxon>Metazoa</taxon>
        <taxon>Chordata</taxon>
        <taxon>Craniata</taxon>
        <taxon>Vertebrata</taxon>
        <taxon>Euteleostomi</taxon>
        <taxon>Mammalia</taxon>
        <taxon>Eutheria</taxon>
        <taxon>Euarchontoglires</taxon>
        <taxon>Primates</taxon>
        <taxon>Haplorrhini</taxon>
        <taxon>Catarrhini</taxon>
        <taxon>Hominidae</taxon>
        <taxon>Homo</taxon>
    </lineage>
</organism>
<dbReference type="EMBL" id="X68148">
    <property type="protein sequence ID" value="CAA48251.1"/>
    <property type="molecule type" value="mRNA"/>
</dbReference>
<dbReference type="EMBL" id="U73377">
    <property type="protein sequence ID" value="AAB49972.1"/>
    <property type="molecule type" value="mRNA"/>
</dbReference>
<dbReference type="EMBL" id="Y09847">
    <property type="protein sequence ID" value="CAA70977.1"/>
    <property type="molecule type" value="Genomic_DNA"/>
</dbReference>
<dbReference type="EMBL" id="AK292143">
    <property type="protein sequence ID" value="BAF84832.1"/>
    <property type="molecule type" value="mRNA"/>
</dbReference>
<dbReference type="EMBL" id="AK315842">
    <property type="protein sequence ID" value="BAF98733.1"/>
    <property type="molecule type" value="mRNA"/>
</dbReference>
<dbReference type="EMBL" id="AB451255">
    <property type="protein sequence ID" value="BAG70069.1"/>
    <property type="molecule type" value="mRNA"/>
</dbReference>
<dbReference type="EMBL" id="AB451379">
    <property type="protein sequence ID" value="BAG70193.1"/>
    <property type="molecule type" value="mRNA"/>
</dbReference>
<dbReference type="EMBL" id="AL451085">
    <property type="status" value="NOT_ANNOTATED_CDS"/>
    <property type="molecule type" value="Genomic_DNA"/>
</dbReference>
<dbReference type="EMBL" id="CH471121">
    <property type="protein sequence ID" value="EAW53168.1"/>
    <property type="molecule type" value="Genomic_DNA"/>
</dbReference>
<dbReference type="EMBL" id="CH471121">
    <property type="protein sequence ID" value="EAW53169.1"/>
    <property type="molecule type" value="Genomic_DNA"/>
</dbReference>
<dbReference type="EMBL" id="CH471121">
    <property type="protein sequence ID" value="EAW53170.1"/>
    <property type="molecule type" value="Genomic_DNA"/>
</dbReference>
<dbReference type="EMBL" id="CH471121">
    <property type="protein sequence ID" value="EAW53171.1"/>
    <property type="molecule type" value="Genomic_DNA"/>
</dbReference>
<dbReference type="EMBL" id="BC014158">
    <property type="protein sequence ID" value="AAH14158.1"/>
    <property type="molecule type" value="mRNA"/>
</dbReference>
<dbReference type="EMBL" id="BC033925">
    <property type="protein sequence ID" value="AAH33925.1"/>
    <property type="molecule type" value="mRNA"/>
</dbReference>
<dbReference type="CCDS" id="CCDS1076.1">
    <molecule id="P29353-7"/>
</dbReference>
<dbReference type="CCDS" id="CCDS30881.1">
    <molecule id="P29353-1"/>
</dbReference>
<dbReference type="CCDS" id="CCDS44233.1">
    <molecule id="P29353-6"/>
</dbReference>
<dbReference type="CCDS" id="CCDS44234.1">
    <molecule id="P29353-2"/>
</dbReference>
<dbReference type="PIR" id="S25776">
    <property type="entry name" value="S25776"/>
</dbReference>
<dbReference type="RefSeq" id="NP_001123512.1">
    <molecule id="P29353-6"/>
    <property type="nucleotide sequence ID" value="NM_001130040.2"/>
</dbReference>
<dbReference type="RefSeq" id="NP_001123513.1">
    <molecule id="P29353-2"/>
    <property type="nucleotide sequence ID" value="NM_001130041.2"/>
</dbReference>
<dbReference type="RefSeq" id="NP_001189788.1">
    <molecule id="P29353-3"/>
    <property type="nucleotide sequence ID" value="NM_001202859.2"/>
</dbReference>
<dbReference type="RefSeq" id="NP_003020.2">
    <molecule id="P29353-7"/>
    <property type="nucleotide sequence ID" value="NM_003029.4"/>
</dbReference>
<dbReference type="RefSeq" id="NP_892113.4">
    <molecule id="P29353-1"/>
    <property type="nucleotide sequence ID" value="NM_183001.4"/>
</dbReference>
<dbReference type="RefSeq" id="XP_047283914.1">
    <molecule id="P29353-1"/>
    <property type="nucleotide sequence ID" value="XM_047427958.1"/>
</dbReference>
<dbReference type="RefSeq" id="XP_047283930.1">
    <molecule id="P29353-7"/>
    <property type="nucleotide sequence ID" value="XM_047427974.1"/>
</dbReference>
<dbReference type="RefSeq" id="XP_047283931.1">
    <molecule id="P29353-7"/>
    <property type="nucleotide sequence ID" value="XM_047427975.1"/>
</dbReference>
<dbReference type="RefSeq" id="XP_047283934.1">
    <molecule id="P29353-7"/>
    <property type="nucleotide sequence ID" value="XM_047427978.1"/>
</dbReference>
<dbReference type="RefSeq" id="XP_047283938.1">
    <molecule id="P29353-2"/>
    <property type="nucleotide sequence ID" value="XM_047427982.1"/>
</dbReference>
<dbReference type="RefSeq" id="XP_047283939.1">
    <molecule id="P29353-2"/>
    <property type="nucleotide sequence ID" value="XM_047427983.1"/>
</dbReference>
<dbReference type="RefSeq" id="XP_047283940.1">
    <molecule id="P29353-2"/>
    <property type="nucleotide sequence ID" value="XM_047427984.1"/>
</dbReference>
<dbReference type="RefSeq" id="XP_054194195.1">
    <molecule id="P29353-1"/>
    <property type="nucleotide sequence ID" value="XM_054338220.1"/>
</dbReference>
<dbReference type="RefSeq" id="XP_054194212.1">
    <molecule id="P29353-7"/>
    <property type="nucleotide sequence ID" value="XM_054338237.1"/>
</dbReference>
<dbReference type="RefSeq" id="XP_054194213.1">
    <molecule id="P29353-7"/>
    <property type="nucleotide sequence ID" value="XM_054338238.1"/>
</dbReference>
<dbReference type="RefSeq" id="XP_054194214.1">
    <molecule id="P29353-7"/>
    <property type="nucleotide sequence ID" value="XM_054338239.1"/>
</dbReference>
<dbReference type="RefSeq" id="XP_054194215.1">
    <molecule id="P29353-2"/>
    <property type="nucleotide sequence ID" value="XM_054338240.1"/>
</dbReference>
<dbReference type="RefSeq" id="XP_054194216.1">
    <molecule id="P29353-2"/>
    <property type="nucleotide sequence ID" value="XM_054338241.1"/>
</dbReference>
<dbReference type="RefSeq" id="XP_054194217.1">
    <molecule id="P29353-2"/>
    <property type="nucleotide sequence ID" value="XM_054338242.1"/>
</dbReference>
<dbReference type="PDB" id="1MIL">
    <property type="method" value="X-ray"/>
    <property type="resolution" value="2.70 A"/>
    <property type="chains" value="A=482-583"/>
</dbReference>
<dbReference type="PDB" id="1N3H">
    <property type="method" value="NMR"/>
    <property type="chains" value="A=111-317"/>
</dbReference>
<dbReference type="PDB" id="1OY2">
    <property type="method" value="NMR"/>
    <property type="chains" value="A=111-317"/>
</dbReference>
<dbReference type="PDB" id="1QG1">
    <property type="method" value="NMR"/>
    <property type="chains" value="I=423-435"/>
</dbReference>
<dbReference type="PDB" id="1SHC">
    <property type="method" value="NMR"/>
    <property type="chains" value="A=127-317"/>
</dbReference>
<dbReference type="PDB" id="1TCE">
    <property type="method" value="NMR"/>
    <property type="chains" value="A=480-583"/>
</dbReference>
<dbReference type="PDB" id="2L1C">
    <property type="method" value="NMR"/>
    <property type="chains" value="A=127-317"/>
</dbReference>
<dbReference type="PDB" id="4JMH">
    <property type="method" value="X-ray"/>
    <property type="resolution" value="2.41 A"/>
    <property type="chains" value="B=344-356"/>
</dbReference>
<dbReference type="PDB" id="4XWX">
    <property type="method" value="X-ray"/>
    <property type="resolution" value="1.87 A"/>
    <property type="chains" value="A=147-311"/>
</dbReference>
<dbReference type="PDB" id="5CZI">
    <property type="method" value="X-ray"/>
    <property type="resolution" value="2.60 A"/>
    <property type="chains" value="B=345-353"/>
</dbReference>
<dbReference type="PDB" id="6DM4">
    <property type="method" value="X-ray"/>
    <property type="resolution" value="1.90 A"/>
    <property type="chains" value="E/G/H=425-431"/>
</dbReference>
<dbReference type="PDBsum" id="1MIL"/>
<dbReference type="PDBsum" id="1N3H"/>
<dbReference type="PDBsum" id="1OY2"/>
<dbReference type="PDBsum" id="1QG1"/>
<dbReference type="PDBsum" id="1SHC"/>
<dbReference type="PDBsum" id="1TCE"/>
<dbReference type="PDBsum" id="2L1C"/>
<dbReference type="PDBsum" id="4JMH"/>
<dbReference type="PDBsum" id="4XWX"/>
<dbReference type="PDBsum" id="5CZI"/>
<dbReference type="PDBsum" id="6DM4"/>
<dbReference type="BMRB" id="P29353"/>
<dbReference type="SMR" id="P29353"/>
<dbReference type="BioGRID" id="112361">
    <property type="interactions" value="348"/>
</dbReference>
<dbReference type="CORUM" id="P29353"/>
<dbReference type="DIP" id="DIP-699N"/>
<dbReference type="ELM" id="P29353"/>
<dbReference type="FunCoup" id="P29353">
    <property type="interactions" value="2417"/>
</dbReference>
<dbReference type="IntAct" id="P29353">
    <property type="interactions" value="175"/>
</dbReference>
<dbReference type="MINT" id="P29353"/>
<dbReference type="STRING" id="9606.ENSP00000401303"/>
<dbReference type="BindingDB" id="P29353"/>
<dbReference type="ChEMBL" id="CHEMBL5626"/>
<dbReference type="GlyGen" id="P29353">
    <property type="glycosylation" value="2 sites, 1 N-linked glycan (1 site), 1 O-linked glycan (1 site)"/>
</dbReference>
<dbReference type="iPTMnet" id="P29353"/>
<dbReference type="PhosphoSitePlus" id="P29353"/>
<dbReference type="SwissPalm" id="P29353"/>
<dbReference type="BioMuta" id="SHC1"/>
<dbReference type="DMDM" id="182676455"/>
<dbReference type="CPTAC" id="CPTAC-1366"/>
<dbReference type="CPTAC" id="CPTAC-1559"/>
<dbReference type="jPOST" id="P29353"/>
<dbReference type="MassIVE" id="P29353"/>
<dbReference type="PaxDb" id="9606-ENSP00000401303"/>
<dbReference type="PeptideAtlas" id="P29353"/>
<dbReference type="ProteomicsDB" id="54546">
    <molecule id="P29353-1"/>
</dbReference>
<dbReference type="ProteomicsDB" id="54547">
    <molecule id="P29353-2"/>
</dbReference>
<dbReference type="ProteomicsDB" id="54548">
    <molecule id="P29353-3"/>
</dbReference>
<dbReference type="ProteomicsDB" id="54549">
    <molecule id="P29353-5"/>
</dbReference>
<dbReference type="ProteomicsDB" id="54550">
    <molecule id="P29353-6"/>
</dbReference>
<dbReference type="ProteomicsDB" id="54551">
    <molecule id="P29353-7"/>
</dbReference>
<dbReference type="Pumba" id="P29353"/>
<dbReference type="ABCD" id="P29353">
    <property type="antibodies" value="9 sequenced antibodies"/>
</dbReference>
<dbReference type="Antibodypedia" id="731">
    <property type="antibodies" value="1179 antibodies from 45 providers"/>
</dbReference>
<dbReference type="DNASU" id="6464"/>
<dbReference type="Ensembl" id="ENST00000368445.9">
    <molecule id="P29353-1"/>
    <property type="protein sequence ID" value="ENSP00000357430.5"/>
    <property type="gene ID" value="ENSG00000160691.19"/>
</dbReference>
<dbReference type="Ensembl" id="ENST00000368450.5">
    <molecule id="P29353-2"/>
    <property type="protein sequence ID" value="ENSP00000357435.1"/>
    <property type="gene ID" value="ENSG00000160691.19"/>
</dbReference>
<dbReference type="Ensembl" id="ENST00000368453.8">
    <molecule id="P29353-7"/>
    <property type="protein sequence ID" value="ENSP00000357438.4"/>
    <property type="gene ID" value="ENSG00000160691.19"/>
</dbReference>
<dbReference type="Ensembl" id="ENST00000448116.7">
    <molecule id="P29353-6"/>
    <property type="protein sequence ID" value="ENSP00000401303.3"/>
    <property type="gene ID" value="ENSG00000160691.19"/>
</dbReference>
<dbReference type="GeneID" id="6464"/>
<dbReference type="KEGG" id="hsa:6464"/>
<dbReference type="MANE-Select" id="ENST00000448116.7">
    <molecule id="P29353-6"/>
    <property type="protein sequence ID" value="ENSP00000401303.3"/>
    <property type="RefSeq nucleotide sequence ID" value="NM_001130040.2"/>
    <property type="RefSeq protein sequence ID" value="NP_001123512.1"/>
</dbReference>
<dbReference type="UCSC" id="uc001ffv.4">
    <molecule id="P29353-1"/>
    <property type="organism name" value="human"/>
</dbReference>
<dbReference type="AGR" id="HGNC:10840"/>
<dbReference type="CTD" id="6464"/>
<dbReference type="DisGeNET" id="6464"/>
<dbReference type="GeneCards" id="SHC1"/>
<dbReference type="HGNC" id="HGNC:10840">
    <property type="gene designation" value="SHC1"/>
</dbReference>
<dbReference type="HPA" id="ENSG00000160691">
    <property type="expression patterns" value="Low tissue specificity"/>
</dbReference>
<dbReference type="MalaCards" id="SHC1"/>
<dbReference type="MIM" id="600560">
    <property type="type" value="gene"/>
</dbReference>
<dbReference type="neXtProt" id="NX_P29353"/>
<dbReference type="OpenTargets" id="ENSG00000160691"/>
<dbReference type="PharmGKB" id="PA35746"/>
<dbReference type="VEuPathDB" id="HostDB:ENSG00000160691"/>
<dbReference type="eggNOG" id="KOG3697">
    <property type="taxonomic scope" value="Eukaryota"/>
</dbReference>
<dbReference type="GeneTree" id="ENSGT00950000182870"/>
<dbReference type="HOGENOM" id="CLU_029532_2_0_1"/>
<dbReference type="InParanoid" id="P29353"/>
<dbReference type="OMA" id="IWFHGSV"/>
<dbReference type="OrthoDB" id="9938362at2759"/>
<dbReference type="PAN-GO" id="P29353">
    <property type="GO annotations" value="4 GO annotations based on evolutionary models"/>
</dbReference>
<dbReference type="PhylomeDB" id="P29353"/>
<dbReference type="TreeFam" id="TF315807"/>
<dbReference type="PathwayCommons" id="P29353"/>
<dbReference type="Reactome" id="R-HSA-1236382">
    <property type="pathway name" value="Constitutive Signaling by Ligand-Responsive EGFR Cancer Variants"/>
</dbReference>
<dbReference type="Reactome" id="R-HSA-1250196">
    <property type="pathway name" value="SHC1 events in ERBB2 signaling"/>
</dbReference>
<dbReference type="Reactome" id="R-HSA-1250347">
    <property type="pathway name" value="SHC1 events in ERBB4 signaling"/>
</dbReference>
<dbReference type="Reactome" id="R-HSA-167044">
    <property type="pathway name" value="Signalling to RAS"/>
</dbReference>
<dbReference type="Reactome" id="R-HSA-180336">
    <property type="pathway name" value="SHC1 events in EGFR signaling"/>
</dbReference>
<dbReference type="Reactome" id="R-HSA-201556">
    <property type="pathway name" value="Signaling by ALK"/>
</dbReference>
<dbReference type="Reactome" id="R-HSA-210993">
    <property type="pathway name" value="Tie2 Signaling"/>
</dbReference>
<dbReference type="Reactome" id="R-HSA-2424491">
    <molecule id="P29353-2"/>
    <property type="pathway name" value="DAP12 signaling"/>
</dbReference>
<dbReference type="Reactome" id="R-HSA-2428933">
    <property type="pathway name" value="SHC-related events triggered by IGF1R"/>
</dbReference>
<dbReference type="Reactome" id="R-HSA-2730905">
    <molecule id="P29353-2"/>
    <property type="pathway name" value="Role of LAT2/NTAL/LAB on calcium mobilization"/>
</dbReference>
<dbReference type="Reactome" id="R-HSA-2871796">
    <molecule id="P29353-2"/>
    <property type="pathway name" value="FCERI mediated MAPK activation"/>
</dbReference>
<dbReference type="Reactome" id="R-HSA-2871809">
    <molecule id="P29353-2"/>
    <property type="pathway name" value="FCERI mediated Ca+2 mobilization"/>
</dbReference>
<dbReference type="Reactome" id="R-HSA-354192">
    <property type="pathway name" value="Integrin signaling"/>
</dbReference>
<dbReference type="Reactome" id="R-HSA-381038">
    <property type="pathway name" value="XBP1(S) activates chaperone genes"/>
</dbReference>
<dbReference type="Reactome" id="R-HSA-512988">
    <property type="pathway name" value="Interleukin-3, Interleukin-5 and GM-CSF signaling"/>
</dbReference>
<dbReference type="Reactome" id="R-HSA-5637810">
    <property type="pathway name" value="Constitutive Signaling by EGFRvIII"/>
</dbReference>
<dbReference type="Reactome" id="R-HSA-5654688">
    <property type="pathway name" value="SHC-mediated cascade:FGFR1"/>
</dbReference>
<dbReference type="Reactome" id="R-HSA-5654699">
    <property type="pathway name" value="SHC-mediated cascade:FGFR2"/>
</dbReference>
<dbReference type="Reactome" id="R-HSA-5654704">
    <property type="pathway name" value="SHC-mediated cascade:FGFR3"/>
</dbReference>
<dbReference type="Reactome" id="R-HSA-5654719">
    <property type="pathway name" value="SHC-mediated cascade:FGFR4"/>
</dbReference>
<dbReference type="Reactome" id="R-HSA-5673001">
    <property type="pathway name" value="RAF/MAP kinase cascade"/>
</dbReference>
<dbReference type="Reactome" id="R-HSA-74749">
    <property type="pathway name" value="Signal attenuation"/>
</dbReference>
<dbReference type="Reactome" id="R-HSA-74751">
    <property type="pathway name" value="Insulin receptor signalling cascade"/>
</dbReference>
<dbReference type="Reactome" id="R-HSA-8851805">
    <molecule id="P29353-2"/>
    <property type="pathway name" value="MET activates RAS signaling"/>
</dbReference>
<dbReference type="Reactome" id="R-HSA-8853659">
    <property type="pathway name" value="RET signaling"/>
</dbReference>
<dbReference type="Reactome" id="R-HSA-8983432">
    <property type="pathway name" value="Interleukin-15 signaling"/>
</dbReference>
<dbReference type="Reactome" id="R-HSA-9009391">
    <property type="pathway name" value="Extra-nuclear estrogen signaling"/>
</dbReference>
<dbReference type="Reactome" id="R-HSA-9020558">
    <property type="pathway name" value="Interleukin-2 signaling"/>
</dbReference>
<dbReference type="Reactome" id="R-HSA-9026519">
    <property type="pathway name" value="Activated NTRK2 signals through RAS"/>
</dbReference>
<dbReference type="Reactome" id="R-HSA-9027284">
    <property type="pathway name" value="Erythropoietin activates RAS"/>
</dbReference>
<dbReference type="Reactome" id="R-HSA-9034864">
    <property type="pathway name" value="Activated NTRK3 signals through RAS"/>
</dbReference>
<dbReference type="Reactome" id="R-HSA-912526">
    <property type="pathway name" value="Interleukin receptor SHC signaling"/>
</dbReference>
<dbReference type="Reactome" id="R-HSA-9634285">
    <property type="pathway name" value="Constitutive Signaling by Overexpressed ERBB2"/>
</dbReference>
<dbReference type="Reactome" id="R-HSA-9634597">
    <property type="pathway name" value="GPER1 signaling"/>
</dbReference>
<dbReference type="Reactome" id="R-HSA-9664565">
    <property type="pathway name" value="Signaling by ERBB2 KD Mutants"/>
</dbReference>
<dbReference type="Reactome" id="R-HSA-9665348">
    <property type="pathway name" value="Signaling by ERBB2 ECD mutants"/>
</dbReference>
<dbReference type="Reactome" id="R-HSA-9665686">
    <property type="pathway name" value="Signaling by ERBB2 TMD/JMD mutants"/>
</dbReference>
<dbReference type="Reactome" id="R-HSA-9674555">
    <property type="pathway name" value="Signaling by CSF3 (G-CSF)"/>
</dbReference>
<dbReference type="Reactome" id="R-HSA-9680350">
    <property type="pathway name" value="Signaling by CSF1 (M-CSF) in myeloid cells"/>
</dbReference>
<dbReference type="Reactome" id="R-HSA-9725370">
    <property type="pathway name" value="Signaling by ALK fusions and activated point mutants"/>
</dbReference>
<dbReference type="Reactome" id="R-HSA-9842663">
    <property type="pathway name" value="Signaling by LTK"/>
</dbReference>
<dbReference type="SignaLink" id="P29353"/>
<dbReference type="SIGNOR" id="P29353"/>
<dbReference type="BioGRID-ORCS" id="6464">
    <property type="hits" value="53 hits in 1161 CRISPR screens"/>
</dbReference>
<dbReference type="ChiTaRS" id="SHC1">
    <property type="organism name" value="human"/>
</dbReference>
<dbReference type="EvolutionaryTrace" id="P29353"/>
<dbReference type="GeneWiki" id="SHC1"/>
<dbReference type="GenomeRNAi" id="6464"/>
<dbReference type="Pharos" id="P29353">
    <property type="development level" value="Tchem"/>
</dbReference>
<dbReference type="PRO" id="PR:P29353"/>
<dbReference type="Proteomes" id="UP000005640">
    <property type="component" value="Chromosome 1"/>
</dbReference>
<dbReference type="RNAct" id="P29353">
    <property type="molecule type" value="protein"/>
</dbReference>
<dbReference type="Bgee" id="ENSG00000160691">
    <property type="expression patterns" value="Expressed in stromal cell of endometrium and 206 other cell types or tissues"/>
</dbReference>
<dbReference type="ExpressionAtlas" id="P29353">
    <property type="expression patterns" value="baseline and differential"/>
</dbReference>
<dbReference type="GO" id="GO:0005829">
    <property type="term" value="C:cytosol"/>
    <property type="evidence" value="ECO:0000304"/>
    <property type="project" value="Reactome"/>
</dbReference>
<dbReference type="GO" id="GO:0005925">
    <property type="term" value="C:focal adhesion"/>
    <property type="evidence" value="ECO:0007669"/>
    <property type="project" value="UniProtKB-SubCell"/>
</dbReference>
<dbReference type="GO" id="GO:0005759">
    <property type="term" value="C:mitochondrial matrix"/>
    <property type="evidence" value="ECO:0007669"/>
    <property type="project" value="UniProtKB-SubCell"/>
</dbReference>
<dbReference type="GO" id="GO:0005886">
    <property type="term" value="C:plasma membrane"/>
    <property type="evidence" value="ECO:0000314"/>
    <property type="project" value="UniProtKB"/>
</dbReference>
<dbReference type="GO" id="GO:0070435">
    <property type="term" value="C:Shc-EGFR complex"/>
    <property type="evidence" value="ECO:0000250"/>
    <property type="project" value="BHF-UCL"/>
</dbReference>
<dbReference type="GO" id="GO:0046875">
    <property type="term" value="F:ephrin receptor binding"/>
    <property type="evidence" value="ECO:0000353"/>
    <property type="project" value="UniProtKB"/>
</dbReference>
<dbReference type="GO" id="GO:0048408">
    <property type="term" value="F:epidermal growth factor binding"/>
    <property type="evidence" value="ECO:0007669"/>
    <property type="project" value="Ensembl"/>
</dbReference>
<dbReference type="GO" id="GO:0005154">
    <property type="term" value="F:epidermal growth factor receptor binding"/>
    <property type="evidence" value="ECO:0000250"/>
    <property type="project" value="BHF-UCL"/>
</dbReference>
<dbReference type="GO" id="GO:0005158">
    <property type="term" value="F:insulin receptor binding"/>
    <property type="evidence" value="ECO:0000353"/>
    <property type="project" value="UniProtKB"/>
</dbReference>
<dbReference type="GO" id="GO:0005159">
    <property type="term" value="F:insulin-like growth factor receptor binding"/>
    <property type="evidence" value="ECO:0000353"/>
    <property type="project" value="UniProtKB"/>
</dbReference>
<dbReference type="GO" id="GO:0005168">
    <property type="term" value="F:neurotrophin TRKA receptor binding"/>
    <property type="evidence" value="ECO:0000353"/>
    <property type="project" value="UniProtKB"/>
</dbReference>
<dbReference type="GO" id="GO:0005543">
    <property type="term" value="F:phospholipid binding"/>
    <property type="evidence" value="ECO:0000304"/>
    <property type="project" value="UniProtKB"/>
</dbReference>
<dbReference type="GO" id="GO:0001784">
    <property type="term" value="F:phosphotyrosine residue binding"/>
    <property type="evidence" value="ECO:0000353"/>
    <property type="project" value="CAFA"/>
</dbReference>
<dbReference type="GO" id="GO:0030971">
    <property type="term" value="F:receptor tyrosine kinase binding"/>
    <property type="evidence" value="ECO:0000318"/>
    <property type="project" value="GO_Central"/>
</dbReference>
<dbReference type="GO" id="GO:0005068">
    <property type="term" value="F:transmembrane receptor protein tyrosine kinase adaptor activity"/>
    <property type="evidence" value="ECO:0000304"/>
    <property type="project" value="UniProtKB"/>
</dbReference>
<dbReference type="GO" id="GO:0030036">
    <property type="term" value="P:actin cytoskeleton organization"/>
    <property type="evidence" value="ECO:0007669"/>
    <property type="project" value="Ensembl"/>
</dbReference>
<dbReference type="GO" id="GO:0001525">
    <property type="term" value="P:angiogenesis"/>
    <property type="evidence" value="ECO:0007669"/>
    <property type="project" value="UniProtKB-KW"/>
</dbReference>
<dbReference type="GO" id="GO:0098609">
    <property type="term" value="P:cell-cell adhesion"/>
    <property type="evidence" value="ECO:0007669"/>
    <property type="project" value="Ensembl"/>
</dbReference>
<dbReference type="GO" id="GO:0071363">
    <property type="term" value="P:cellular response to growth factor stimulus"/>
    <property type="evidence" value="ECO:0000314"/>
    <property type="project" value="UniProtKB"/>
</dbReference>
<dbReference type="GO" id="GO:0042742">
    <property type="term" value="P:defense response to bacterium"/>
    <property type="evidence" value="ECO:0000315"/>
    <property type="project" value="CAFA"/>
</dbReference>
<dbReference type="GO" id="GO:0007173">
    <property type="term" value="P:epidermal growth factor receptor signaling pathway"/>
    <property type="evidence" value="ECO:0000318"/>
    <property type="project" value="GO_Central"/>
</dbReference>
<dbReference type="GO" id="GO:0007507">
    <property type="term" value="P:heart development"/>
    <property type="evidence" value="ECO:0007669"/>
    <property type="project" value="Ensembl"/>
</dbReference>
<dbReference type="GO" id="GO:0008286">
    <property type="term" value="P:insulin receptor signaling pathway"/>
    <property type="evidence" value="ECO:0000250"/>
    <property type="project" value="BHF-UCL"/>
</dbReference>
<dbReference type="GO" id="GO:0048009">
    <property type="term" value="P:insulin-like growth factor receptor signaling pathway"/>
    <property type="evidence" value="ECO:0007669"/>
    <property type="project" value="Ensembl"/>
</dbReference>
<dbReference type="GO" id="GO:0035556">
    <property type="term" value="P:intracellular signal transduction"/>
    <property type="evidence" value="ECO:0007669"/>
    <property type="project" value="InterPro"/>
</dbReference>
<dbReference type="GO" id="GO:0016525">
    <property type="term" value="P:negative regulation of angiogenesis"/>
    <property type="evidence" value="ECO:0000316"/>
    <property type="project" value="BHF-UCL"/>
</dbReference>
<dbReference type="GO" id="GO:0043066">
    <property type="term" value="P:negative regulation of apoptotic process"/>
    <property type="evidence" value="ECO:0000315"/>
    <property type="project" value="CAFA"/>
</dbReference>
<dbReference type="GO" id="GO:0045892">
    <property type="term" value="P:negative regulation of DNA-templated transcription"/>
    <property type="evidence" value="ECO:0000315"/>
    <property type="project" value="CAFA"/>
</dbReference>
<dbReference type="GO" id="GO:0008284">
    <property type="term" value="P:positive regulation of cell population proliferation"/>
    <property type="evidence" value="ECO:0000250"/>
    <property type="project" value="BHF-UCL"/>
</dbReference>
<dbReference type="GO" id="GO:0071864">
    <property type="term" value="P:positive regulation of cell proliferation in bone marrow"/>
    <property type="evidence" value="ECO:0000316"/>
    <property type="project" value="BHF-UCL"/>
</dbReference>
<dbReference type="GO" id="GO:0045893">
    <property type="term" value="P:positive regulation of DNA-templated transcription"/>
    <property type="evidence" value="ECO:0000315"/>
    <property type="project" value="CAFA"/>
</dbReference>
<dbReference type="GO" id="GO:0070374">
    <property type="term" value="P:positive regulation of ERK1 and ERK2 cascade"/>
    <property type="evidence" value="ECO:0000315"/>
    <property type="project" value="CAFA"/>
</dbReference>
<dbReference type="GO" id="GO:0043410">
    <property type="term" value="P:positive regulation of MAPK cascade"/>
    <property type="evidence" value="ECO:0000314"/>
    <property type="project" value="UniProtKB"/>
</dbReference>
<dbReference type="GO" id="GO:0090322">
    <property type="term" value="P:regulation of superoxide metabolic process"/>
    <property type="evidence" value="ECO:0000316"/>
    <property type="project" value="BHF-UCL"/>
</dbReference>
<dbReference type="CDD" id="cd01209">
    <property type="entry name" value="PTB_Shc"/>
    <property type="match status" value="1"/>
</dbReference>
<dbReference type="CDD" id="cd09925">
    <property type="entry name" value="SH2_SHC"/>
    <property type="match status" value="1"/>
</dbReference>
<dbReference type="FunFam" id="2.30.29.30:FF:000036">
    <property type="entry name" value="SHC-transforming protein 1 isoform 3"/>
    <property type="match status" value="1"/>
</dbReference>
<dbReference type="FunFam" id="3.30.505.10:FF:000005">
    <property type="entry name" value="SHC-transforming protein 1 isoform 3"/>
    <property type="match status" value="1"/>
</dbReference>
<dbReference type="Gene3D" id="2.30.29.30">
    <property type="entry name" value="Pleckstrin-homology domain (PH domain)/Phosphotyrosine-binding domain (PTB)"/>
    <property type="match status" value="1"/>
</dbReference>
<dbReference type="Gene3D" id="3.30.505.10">
    <property type="entry name" value="SH2 domain"/>
    <property type="match status" value="1"/>
</dbReference>
<dbReference type="IDEAL" id="IID00511"/>
<dbReference type="InterPro" id="IPR051235">
    <property type="entry name" value="CEP152/SHC-Transforming"/>
</dbReference>
<dbReference type="InterPro" id="IPR011993">
    <property type="entry name" value="PH-like_dom_sf"/>
</dbReference>
<dbReference type="InterPro" id="IPR006019">
    <property type="entry name" value="PID_Shc-like"/>
</dbReference>
<dbReference type="InterPro" id="IPR006020">
    <property type="entry name" value="PTB/PI_dom"/>
</dbReference>
<dbReference type="InterPro" id="IPR000980">
    <property type="entry name" value="SH2"/>
</dbReference>
<dbReference type="InterPro" id="IPR036860">
    <property type="entry name" value="SH2_dom_sf"/>
</dbReference>
<dbReference type="InterPro" id="IPR035676">
    <property type="entry name" value="SHC_SH2"/>
</dbReference>
<dbReference type="PANTHER" id="PTHR10337">
    <property type="entry name" value="SHC TRANSFORMING PROTEIN"/>
    <property type="match status" value="1"/>
</dbReference>
<dbReference type="PANTHER" id="PTHR10337:SF2">
    <property type="entry name" value="SHC-TRANSFORMING PROTEIN 1"/>
    <property type="match status" value="1"/>
</dbReference>
<dbReference type="Pfam" id="PF00640">
    <property type="entry name" value="PID"/>
    <property type="match status" value="1"/>
</dbReference>
<dbReference type="Pfam" id="PF00017">
    <property type="entry name" value="SH2"/>
    <property type="match status" value="1"/>
</dbReference>
<dbReference type="PRINTS" id="PR00401">
    <property type="entry name" value="SH2DOMAIN"/>
</dbReference>
<dbReference type="PRINTS" id="PR00629">
    <property type="entry name" value="SHCPIDOMAIN"/>
</dbReference>
<dbReference type="SMART" id="SM00462">
    <property type="entry name" value="PTB"/>
    <property type="match status" value="1"/>
</dbReference>
<dbReference type="SMART" id="SM00252">
    <property type="entry name" value="SH2"/>
    <property type="match status" value="1"/>
</dbReference>
<dbReference type="SUPFAM" id="SSF50729">
    <property type="entry name" value="PH domain-like"/>
    <property type="match status" value="1"/>
</dbReference>
<dbReference type="SUPFAM" id="SSF55550">
    <property type="entry name" value="SH2 domain"/>
    <property type="match status" value="1"/>
</dbReference>
<dbReference type="PROSITE" id="PS01179">
    <property type="entry name" value="PID"/>
    <property type="match status" value="1"/>
</dbReference>
<dbReference type="PROSITE" id="PS50001">
    <property type="entry name" value="SH2"/>
    <property type="match status" value="1"/>
</dbReference>
<sequence>MDLLPPKPKYNPLRNESLSSLEEGASGSTPPEELPSPSASSLGPILPPLPGDDSPTTLCSFFPRMSNLRLANPAGGRPGSKGEPGRAADDGEGIVGAAMPDSGPLPLLQDMNKLSGGGGRRTRVEGGQLGGEEWTRHGSFVNKPTRGWLHPNDKVMGPGVSYLVRYMGCVEVLQSMRALDFNTRTQVTREAISLVCEAVPGAKGATRRRKPCSRPLSSILGRSNLKFAGMPITLTVSTSSLNLMAADCKQIIANHHMQSISFASGGDPDTAEYVAYVAKDPVNQRACHILECPEGLAQDVISTIGQAFELRFKQYLRNPPKLVTPHDRMAGFDGSAWDEEEEEPPDHQYYNDFPGKEPPLGGVVDMRLREGAAPGAARPTAPNAQTPSHLGATLPVGQPVGGDPEVRKQMPPPPPCPGRELFDDPSYVNVQNLDKARQAVGGAGPPNPAINGSAPRDLFDMKPFEDALRVPPPPQSVSMAEQLRGEPWFHGKLSRREAEALLQLNGDFLVRESTTTPGQYVLTGLQSGQPKHLLLVDPEGVVRTKDHRFESVSHLISYHMDNHLPIISAGSELCLQQPVERKL</sequence>
<reference key="1">
    <citation type="journal article" date="1992" name="Cell">
        <title>A novel transforming protein (SHC) with an SH2 domain is implicated in mitogenic signal transduction.</title>
        <authorList>
            <person name="Pelicci G."/>
            <person name="Lanfrancone L."/>
            <person name="Grignani F."/>
            <person name="McGlade J."/>
            <person name="Cavallo F."/>
            <person name="Forni G."/>
            <person name="Nicoletti I."/>
            <person name="Grignani F."/>
            <person name="Pawson T."/>
            <person name="Pelicci P.-G."/>
        </authorList>
    </citation>
    <scope>NUCLEOTIDE SEQUENCE [MRNA] (ISOFORMS P46SHC AND P52SHC)</scope>
</reference>
<reference key="2">
    <citation type="journal article" date="1997" name="EMBO J.">
        <title>Opposite effects of the p52shc/p46shc and p66shc splicing isoforms on the EGF receptor-MAP kinase-fos signalling pathway.</title>
        <authorList>
            <person name="Migliaccio E."/>
            <person name="Mele S."/>
            <person name="Salcini A.E."/>
            <person name="Pelicci G."/>
            <person name="Lai K.M."/>
            <person name="Superti-Furga G."/>
            <person name="Pawson T."/>
            <person name="Di Fiore P.P."/>
            <person name="Lanfrancone L."/>
            <person name="Pelicci P.-G."/>
        </authorList>
    </citation>
    <scope>NUCLEOTIDE SEQUENCE [MRNA] (ISOFORM P66SHC)</scope>
</reference>
<reference key="3">
    <citation type="journal article" date="1997" name="Genomics">
        <title>Characterization of human SHC p66 cDNA and its processed pseudogene mapping to Xq12-q13.1.</title>
        <authorList>
            <person name="Harun R.B."/>
            <person name="Smith K.K."/>
            <person name="Leek J.P."/>
            <person name="Markham A.F."/>
            <person name="Norris A."/>
            <person name="Morrison J.F."/>
        </authorList>
    </citation>
    <scope>NUCLEOTIDE SEQUENCE [GENOMIC DNA]</scope>
    <source>
        <tissue>Fibroblast</tissue>
    </source>
</reference>
<reference key="4">
    <citation type="journal article" date="2004" name="Nat. Genet.">
        <title>Complete sequencing and characterization of 21,243 full-length human cDNAs.</title>
        <authorList>
            <person name="Ota T."/>
            <person name="Suzuki Y."/>
            <person name="Nishikawa T."/>
            <person name="Otsuki T."/>
            <person name="Sugiyama T."/>
            <person name="Irie R."/>
            <person name="Wakamatsu A."/>
            <person name="Hayashi K."/>
            <person name="Sato H."/>
            <person name="Nagai K."/>
            <person name="Kimura K."/>
            <person name="Makita H."/>
            <person name="Sekine M."/>
            <person name="Obayashi M."/>
            <person name="Nishi T."/>
            <person name="Shibahara T."/>
            <person name="Tanaka T."/>
            <person name="Ishii S."/>
            <person name="Yamamoto J."/>
            <person name="Saito K."/>
            <person name="Kawai Y."/>
            <person name="Isono Y."/>
            <person name="Nakamura Y."/>
            <person name="Nagahari K."/>
            <person name="Murakami K."/>
            <person name="Yasuda T."/>
            <person name="Iwayanagi T."/>
            <person name="Wagatsuma M."/>
            <person name="Shiratori A."/>
            <person name="Sudo H."/>
            <person name="Hosoiri T."/>
            <person name="Kaku Y."/>
            <person name="Kodaira H."/>
            <person name="Kondo H."/>
            <person name="Sugawara M."/>
            <person name="Takahashi M."/>
            <person name="Kanda K."/>
            <person name="Yokoi T."/>
            <person name="Furuya T."/>
            <person name="Kikkawa E."/>
            <person name="Omura Y."/>
            <person name="Abe K."/>
            <person name="Kamihara K."/>
            <person name="Katsuta N."/>
            <person name="Sato K."/>
            <person name="Tanikawa M."/>
            <person name="Yamazaki M."/>
            <person name="Ninomiya K."/>
            <person name="Ishibashi T."/>
            <person name="Yamashita H."/>
            <person name="Murakawa K."/>
            <person name="Fujimori K."/>
            <person name="Tanai H."/>
            <person name="Kimata M."/>
            <person name="Watanabe M."/>
            <person name="Hiraoka S."/>
            <person name="Chiba Y."/>
            <person name="Ishida S."/>
            <person name="Ono Y."/>
            <person name="Takiguchi S."/>
            <person name="Watanabe S."/>
            <person name="Yosida M."/>
            <person name="Hotuta T."/>
            <person name="Kusano J."/>
            <person name="Kanehori K."/>
            <person name="Takahashi-Fujii A."/>
            <person name="Hara H."/>
            <person name="Tanase T.-O."/>
            <person name="Nomura Y."/>
            <person name="Togiya S."/>
            <person name="Komai F."/>
            <person name="Hara R."/>
            <person name="Takeuchi K."/>
            <person name="Arita M."/>
            <person name="Imose N."/>
            <person name="Musashino K."/>
            <person name="Yuuki H."/>
            <person name="Oshima A."/>
            <person name="Sasaki N."/>
            <person name="Aotsuka S."/>
            <person name="Yoshikawa Y."/>
            <person name="Matsunawa H."/>
            <person name="Ichihara T."/>
            <person name="Shiohata N."/>
            <person name="Sano S."/>
            <person name="Moriya S."/>
            <person name="Momiyama H."/>
            <person name="Satoh N."/>
            <person name="Takami S."/>
            <person name="Terashima Y."/>
            <person name="Suzuki O."/>
            <person name="Nakagawa S."/>
            <person name="Senoh A."/>
            <person name="Mizoguchi H."/>
            <person name="Goto Y."/>
            <person name="Shimizu F."/>
            <person name="Wakebe H."/>
            <person name="Hishigaki H."/>
            <person name="Watanabe T."/>
            <person name="Sugiyama A."/>
            <person name="Takemoto M."/>
            <person name="Kawakami B."/>
            <person name="Yamazaki M."/>
            <person name="Watanabe K."/>
            <person name="Kumagai A."/>
            <person name="Itakura S."/>
            <person name="Fukuzumi Y."/>
            <person name="Fujimori Y."/>
            <person name="Komiyama M."/>
            <person name="Tashiro H."/>
            <person name="Tanigami A."/>
            <person name="Fujiwara T."/>
            <person name="Ono T."/>
            <person name="Yamada K."/>
            <person name="Fujii Y."/>
            <person name="Ozaki K."/>
            <person name="Hirao M."/>
            <person name="Ohmori Y."/>
            <person name="Kawabata A."/>
            <person name="Hikiji T."/>
            <person name="Kobatake N."/>
            <person name="Inagaki H."/>
            <person name="Ikema Y."/>
            <person name="Okamoto S."/>
            <person name="Okitani R."/>
            <person name="Kawakami T."/>
            <person name="Noguchi S."/>
            <person name="Itoh T."/>
            <person name="Shigeta K."/>
            <person name="Senba T."/>
            <person name="Matsumura K."/>
            <person name="Nakajima Y."/>
            <person name="Mizuno T."/>
            <person name="Morinaga M."/>
            <person name="Sasaki M."/>
            <person name="Togashi T."/>
            <person name="Oyama M."/>
            <person name="Hata H."/>
            <person name="Watanabe M."/>
            <person name="Komatsu T."/>
            <person name="Mizushima-Sugano J."/>
            <person name="Satoh T."/>
            <person name="Shirai Y."/>
            <person name="Takahashi Y."/>
            <person name="Nakagawa K."/>
            <person name="Okumura K."/>
            <person name="Nagase T."/>
            <person name="Nomura N."/>
            <person name="Kikuchi H."/>
            <person name="Masuho Y."/>
            <person name="Yamashita R."/>
            <person name="Nakai K."/>
            <person name="Yada T."/>
            <person name="Nakamura Y."/>
            <person name="Ohara O."/>
            <person name="Isogai T."/>
            <person name="Sugano S."/>
        </authorList>
    </citation>
    <scope>NUCLEOTIDE SEQUENCE [LARGE SCALE MRNA] (ISOFORM P52SHC)</scope>
    <source>
        <tissue>Mammary gland</tissue>
        <tissue>Synovium</tissue>
    </source>
</reference>
<reference key="5">
    <citation type="journal article" date="2008" name="Nat. Methods">
        <title>Human protein factory for converting the transcriptome into an in vitro-expressed proteome.</title>
        <authorList>
            <person name="Goshima N."/>
            <person name="Kawamura Y."/>
            <person name="Fukumoto A."/>
            <person name="Miura A."/>
            <person name="Honma R."/>
            <person name="Satoh R."/>
            <person name="Wakamatsu A."/>
            <person name="Yamamoto J."/>
            <person name="Kimura K."/>
            <person name="Nishikawa T."/>
            <person name="Andoh T."/>
            <person name="Iida Y."/>
            <person name="Ishikawa K."/>
            <person name="Ito E."/>
            <person name="Kagawa N."/>
            <person name="Kaminaga C."/>
            <person name="Kanehori K."/>
            <person name="Kawakami B."/>
            <person name="Kenmochi K."/>
            <person name="Kimura R."/>
            <person name="Kobayashi M."/>
            <person name="Kuroita T."/>
            <person name="Kuwayama H."/>
            <person name="Maruyama Y."/>
            <person name="Matsuo K."/>
            <person name="Minami K."/>
            <person name="Mitsubori M."/>
            <person name="Mori M."/>
            <person name="Morishita R."/>
            <person name="Murase A."/>
            <person name="Nishikawa A."/>
            <person name="Nishikawa S."/>
            <person name="Okamoto T."/>
            <person name="Sakagami N."/>
            <person name="Sakamoto Y."/>
            <person name="Sasaki Y."/>
            <person name="Seki T."/>
            <person name="Sono S."/>
            <person name="Sugiyama A."/>
            <person name="Sumiya T."/>
            <person name="Takayama T."/>
            <person name="Takayama Y."/>
            <person name="Takeda H."/>
            <person name="Togashi T."/>
            <person name="Yahata K."/>
            <person name="Yamada H."/>
            <person name="Yanagisawa Y."/>
            <person name="Endo Y."/>
            <person name="Imamoto F."/>
            <person name="Kisu Y."/>
            <person name="Tanaka S."/>
            <person name="Isogai T."/>
            <person name="Imai J."/>
            <person name="Watanabe S."/>
            <person name="Nomura N."/>
        </authorList>
    </citation>
    <scope>NUCLEOTIDE SEQUENCE [LARGE SCALE MRNA] (ISOFORM 6)</scope>
</reference>
<reference key="6">
    <citation type="journal article" date="2006" name="Nature">
        <title>The DNA sequence and biological annotation of human chromosome 1.</title>
        <authorList>
            <person name="Gregory S.G."/>
            <person name="Barlow K.F."/>
            <person name="McLay K.E."/>
            <person name="Kaul R."/>
            <person name="Swarbreck D."/>
            <person name="Dunham A."/>
            <person name="Scott C.E."/>
            <person name="Howe K.L."/>
            <person name="Woodfine K."/>
            <person name="Spencer C.C.A."/>
            <person name="Jones M.C."/>
            <person name="Gillson C."/>
            <person name="Searle S."/>
            <person name="Zhou Y."/>
            <person name="Kokocinski F."/>
            <person name="McDonald L."/>
            <person name="Evans R."/>
            <person name="Phillips K."/>
            <person name="Atkinson A."/>
            <person name="Cooper R."/>
            <person name="Jones C."/>
            <person name="Hall R.E."/>
            <person name="Andrews T.D."/>
            <person name="Lloyd C."/>
            <person name="Ainscough R."/>
            <person name="Almeida J.P."/>
            <person name="Ambrose K.D."/>
            <person name="Anderson F."/>
            <person name="Andrew R.W."/>
            <person name="Ashwell R.I.S."/>
            <person name="Aubin K."/>
            <person name="Babbage A.K."/>
            <person name="Bagguley C.L."/>
            <person name="Bailey J."/>
            <person name="Beasley H."/>
            <person name="Bethel G."/>
            <person name="Bird C.P."/>
            <person name="Bray-Allen S."/>
            <person name="Brown J.Y."/>
            <person name="Brown A.J."/>
            <person name="Buckley D."/>
            <person name="Burton J."/>
            <person name="Bye J."/>
            <person name="Carder C."/>
            <person name="Chapman J.C."/>
            <person name="Clark S.Y."/>
            <person name="Clarke G."/>
            <person name="Clee C."/>
            <person name="Cobley V."/>
            <person name="Collier R.E."/>
            <person name="Corby N."/>
            <person name="Coville G.J."/>
            <person name="Davies J."/>
            <person name="Deadman R."/>
            <person name="Dunn M."/>
            <person name="Earthrowl M."/>
            <person name="Ellington A.G."/>
            <person name="Errington H."/>
            <person name="Frankish A."/>
            <person name="Frankland J."/>
            <person name="French L."/>
            <person name="Garner P."/>
            <person name="Garnett J."/>
            <person name="Gay L."/>
            <person name="Ghori M.R.J."/>
            <person name="Gibson R."/>
            <person name="Gilby L.M."/>
            <person name="Gillett W."/>
            <person name="Glithero R.J."/>
            <person name="Grafham D.V."/>
            <person name="Griffiths C."/>
            <person name="Griffiths-Jones S."/>
            <person name="Grocock R."/>
            <person name="Hammond S."/>
            <person name="Harrison E.S.I."/>
            <person name="Hart E."/>
            <person name="Haugen E."/>
            <person name="Heath P.D."/>
            <person name="Holmes S."/>
            <person name="Holt K."/>
            <person name="Howden P.J."/>
            <person name="Hunt A.R."/>
            <person name="Hunt S.E."/>
            <person name="Hunter G."/>
            <person name="Isherwood J."/>
            <person name="James R."/>
            <person name="Johnson C."/>
            <person name="Johnson D."/>
            <person name="Joy A."/>
            <person name="Kay M."/>
            <person name="Kershaw J.K."/>
            <person name="Kibukawa M."/>
            <person name="Kimberley A.M."/>
            <person name="King A."/>
            <person name="Knights A.J."/>
            <person name="Lad H."/>
            <person name="Laird G."/>
            <person name="Lawlor S."/>
            <person name="Leongamornlert D.A."/>
            <person name="Lloyd D.M."/>
            <person name="Loveland J."/>
            <person name="Lovell J."/>
            <person name="Lush M.J."/>
            <person name="Lyne R."/>
            <person name="Martin S."/>
            <person name="Mashreghi-Mohammadi M."/>
            <person name="Matthews L."/>
            <person name="Matthews N.S.W."/>
            <person name="McLaren S."/>
            <person name="Milne S."/>
            <person name="Mistry S."/>
            <person name="Moore M.J.F."/>
            <person name="Nickerson T."/>
            <person name="O'Dell C.N."/>
            <person name="Oliver K."/>
            <person name="Palmeiri A."/>
            <person name="Palmer S.A."/>
            <person name="Parker A."/>
            <person name="Patel D."/>
            <person name="Pearce A.V."/>
            <person name="Peck A.I."/>
            <person name="Pelan S."/>
            <person name="Phelps K."/>
            <person name="Phillimore B.J."/>
            <person name="Plumb R."/>
            <person name="Rajan J."/>
            <person name="Raymond C."/>
            <person name="Rouse G."/>
            <person name="Saenphimmachak C."/>
            <person name="Sehra H.K."/>
            <person name="Sheridan E."/>
            <person name="Shownkeen R."/>
            <person name="Sims S."/>
            <person name="Skuce C.D."/>
            <person name="Smith M."/>
            <person name="Steward C."/>
            <person name="Subramanian S."/>
            <person name="Sycamore N."/>
            <person name="Tracey A."/>
            <person name="Tromans A."/>
            <person name="Van Helmond Z."/>
            <person name="Wall M."/>
            <person name="Wallis J.M."/>
            <person name="White S."/>
            <person name="Whitehead S.L."/>
            <person name="Wilkinson J.E."/>
            <person name="Willey D.L."/>
            <person name="Williams H."/>
            <person name="Wilming L."/>
            <person name="Wray P.W."/>
            <person name="Wu Z."/>
            <person name="Coulson A."/>
            <person name="Vaudin M."/>
            <person name="Sulston J.E."/>
            <person name="Durbin R.M."/>
            <person name="Hubbard T."/>
            <person name="Wooster R."/>
            <person name="Dunham I."/>
            <person name="Carter N.P."/>
            <person name="McVean G."/>
            <person name="Ross M.T."/>
            <person name="Harrow J."/>
            <person name="Olson M.V."/>
            <person name="Beck S."/>
            <person name="Rogers J."/>
            <person name="Bentley D.R."/>
        </authorList>
    </citation>
    <scope>NUCLEOTIDE SEQUENCE [LARGE SCALE GENOMIC DNA]</scope>
</reference>
<reference key="7">
    <citation type="submission" date="2005-09" db="EMBL/GenBank/DDBJ databases">
        <authorList>
            <person name="Mural R.J."/>
            <person name="Istrail S."/>
            <person name="Sutton G.G."/>
            <person name="Florea L."/>
            <person name="Halpern A.L."/>
            <person name="Mobarry C.M."/>
            <person name="Lippert R."/>
            <person name="Walenz B."/>
            <person name="Shatkay H."/>
            <person name="Dew I."/>
            <person name="Miller J.R."/>
            <person name="Flanigan M.J."/>
            <person name="Edwards N.J."/>
            <person name="Bolanos R."/>
            <person name="Fasulo D."/>
            <person name="Halldorsson B.V."/>
            <person name="Hannenhalli S."/>
            <person name="Turner R."/>
            <person name="Yooseph S."/>
            <person name="Lu F."/>
            <person name="Nusskern D.R."/>
            <person name="Shue B.C."/>
            <person name="Zheng X.H."/>
            <person name="Zhong F."/>
            <person name="Delcher A.L."/>
            <person name="Huson D.H."/>
            <person name="Kravitz S.A."/>
            <person name="Mouchard L."/>
            <person name="Reinert K."/>
            <person name="Remington K.A."/>
            <person name="Clark A.G."/>
            <person name="Waterman M.S."/>
            <person name="Eichler E.E."/>
            <person name="Adams M.D."/>
            <person name="Hunkapiller M.W."/>
            <person name="Myers E.W."/>
            <person name="Venter J.C."/>
        </authorList>
    </citation>
    <scope>NUCLEOTIDE SEQUENCE [LARGE SCALE GENOMIC DNA]</scope>
</reference>
<reference key="8">
    <citation type="journal article" date="2004" name="Genome Res.">
        <title>The status, quality, and expansion of the NIH full-length cDNA project: the Mammalian Gene Collection (MGC).</title>
        <authorList>
            <consortium name="The MGC Project Team"/>
        </authorList>
    </citation>
    <scope>NUCLEOTIDE SEQUENCE [LARGE SCALE MRNA] (ISOFORMS P52SHC AND 7)</scope>
    <source>
        <tissue>Choriocarcinoma</tissue>
        <tissue>Neuroblastoma</tissue>
    </source>
</reference>
<reference key="9">
    <citation type="journal article" date="1994" name="J. Biol. Chem.">
        <title>Direct interaction between Shc and the platelet-derived growth factor beta-receptor.</title>
        <authorList>
            <person name="Yokote K."/>
            <person name="Mori S."/>
            <person name="Hansen K."/>
            <person name="McGlade J."/>
            <person name="Pawson T."/>
            <person name="Heldin C.H."/>
            <person name="Claesson-Welsh L."/>
        </authorList>
    </citation>
    <scope>INTERACTION WITH PDGFRB AND GRB2</scope>
    <scope>PHOSPHORYLATION</scope>
</reference>
<reference key="10">
    <citation type="journal article" date="1994" name="Neuron">
        <title>Trk receptors use redundant signal transduction pathways involving SHC and PLC-gamma 1 to mediate NGF responses.</title>
        <authorList>
            <person name="Stephens R.M."/>
            <person name="Loeb D.M."/>
            <person name="Copeland T.D."/>
            <person name="Pawson T."/>
            <person name="Greene L.A."/>
            <person name="Kaplan D.R."/>
        </authorList>
    </citation>
    <scope>INTERACTION WITH NTRK1</scope>
</reference>
<reference key="11">
    <citation type="journal article" date="1995" name="J. Biol. Chem.">
        <title>Non-SH2 domains within insulin receptor substrate-1 and SHC mediate their phosphotyrosine-dependent interaction with the NPEY motif of the insulin-like growth factor I receptor.</title>
        <authorList>
            <person name="Craparo A."/>
            <person name="O'Neill T.J."/>
            <person name="Gustafson T.A."/>
        </authorList>
    </citation>
    <scope>INTERACTION WITH IGF1R</scope>
</reference>
<reference key="12">
    <citation type="journal article" date="1995" name="J. Biol. Chem.">
        <title>Distinct modes of interaction of SHC and insulin receptor substrate-1 with the insulin receptor NPEY region via non-SH2 domains.</title>
        <authorList>
            <person name="He W."/>
            <person name="O'Neill T.J."/>
            <person name="Gustafson T.A."/>
        </authorList>
    </citation>
    <scope>INTERACTION WITH INSR</scope>
</reference>
<reference key="13">
    <citation type="journal article" date="1995" name="Mol. Cell. Biol.">
        <title>Phosphotyrosine-dependent interaction of SHC and insulin receptor substrate 1 with the NPEY motif of the insulin receptor via a novel non-SH2 domain.</title>
        <authorList>
            <person name="Gustafson T.A."/>
            <person name="He W."/>
            <person name="Craparo A."/>
            <person name="Schaub C.D."/>
            <person name="O'Neill T.J."/>
        </authorList>
    </citation>
    <scope>INTERACTION WITH INSR</scope>
</reference>
<reference key="14">
    <citation type="journal article" date="1996" name="Blood">
        <title>Cloning and characterization of human SHIP, the 145-kD inositol 5-phosphatase that associates with SHC after cytokine stimulation.</title>
        <authorList>
            <person name="Ware M.D."/>
            <person name="Rosten P."/>
            <person name="Damen J.E."/>
            <person name="Liu L."/>
            <person name="Humphries R.K."/>
            <person name="Krystal G."/>
        </authorList>
    </citation>
    <scope>INTERACTION WITH INPP5D</scope>
</reference>
<reference key="15">
    <citation type="journal article" date="1996" name="Curr. Biol.">
        <title>The Shc adaptor protein is highly phosphorylated at conserved, twin tyrosine residues (Y239/240) that mediate protein-protein interactions.</title>
        <authorList>
            <person name="van der Geer P."/>
            <person name="Wiley S."/>
            <person name="Gish G.D."/>
            <person name="Pawson T."/>
        </authorList>
    </citation>
    <scope>PHOSPHORYLATION AT TYR-349 AND TYR-350</scope>
</reference>
<reference key="16">
    <citation type="journal article" date="1996" name="J. Biol. Chem.">
        <title>Grb7 is a downstream signaling component of platelet-derived growth factor alpha- and beta-receptors.</title>
        <authorList>
            <person name="Yokote K."/>
            <person name="Margolis B."/>
            <person name="Heldin C.H."/>
            <person name="Claesson-Welsh L."/>
        </authorList>
    </citation>
    <scope>INTERACTION WITH GRB7</scope>
</reference>
<reference key="17">
    <citation type="journal article" date="1997" name="J. Biol. Chem.">
        <title>Direct association of Csk homologous kinase (CHK) with the diphosphorylated site Tyr568/570 of the activated c-KIT in megakaryocytes.</title>
        <authorList>
            <person name="Price D.J."/>
            <person name="Rivnay B."/>
            <person name="Fu Y."/>
            <person name="Jiang S."/>
            <person name="Avraham S."/>
            <person name="Avraham H."/>
        </authorList>
    </citation>
    <scope>INTERACTION WITH KIT</scope>
</reference>
<reference key="18">
    <citation type="journal article" date="1997" name="J. Biol. Chem.">
        <title>Focal adhesion kinase overexpression enhances ras-dependent integrin signaling to ERK2/mitogen-activated protein kinase through interactions with and activation of c-Src.</title>
        <authorList>
            <person name="Schlaepfer D.D."/>
            <person name="Hunter T."/>
        </authorList>
    </citation>
    <scope>PHOSPHORYLATION</scope>
</reference>
<reference key="19">
    <citation type="journal article" date="1997" name="Mol. Cell. Biol.">
        <title>Tyrosine phosphorylation sites at amino acids 239 and 240 of Shc are involved in epidermal growth factor-induced mitogenic signaling that is distinct from Ras/mitogen-activated protein kinase activation.</title>
        <authorList>
            <person name="Gotoh N."/>
            <person name="Toyoda M."/>
            <person name="Shibuya M."/>
        </authorList>
    </citation>
    <scope>PHOSPHORYLATION AT TYR-349; TYR-350 AND TYR-427</scope>
</reference>
<reference key="20">
    <citation type="journal article" date="1997" name="Oncogene">
        <title>Cloning and characterization of APS, an adaptor molecule containing PH and SH2 domains that is tyrosine phosphorylated upon B-cell receptor stimulation.</title>
        <authorList>
            <person name="Yokouchi M."/>
            <person name="Suzuki R."/>
            <person name="Masuhara M."/>
            <person name="Komiya S."/>
            <person name="Inoue A."/>
            <person name="Yoshimura A."/>
        </authorList>
    </citation>
    <scope>INTERACTION WITH SH2B2</scope>
</reference>
<reference key="21">
    <citation type="journal article" date="1998" name="J. Biol. Chem.">
        <title>Growth factors and insulin stimulate tyrosine phosphorylation of the 51C/SHIP2 protein.</title>
        <authorList>
            <person name="Habib T."/>
            <person name="Hejna J.A."/>
            <person name="Moses R.E."/>
            <person name="Decker S.J."/>
        </authorList>
    </citation>
    <scope>INTERACTION WITH INPP5D AND INPPL1</scope>
</reference>
<reference key="22">
    <citation type="journal article" date="1998" name="Mol. Cell. Biol.">
        <title>Epidermal growth factor receptor and the adaptor protein p52Shc are specific substrates of T-cell protein tyrosine phosphatase.</title>
        <authorList>
            <person name="Tiganis T."/>
            <person name="Bennett A.M."/>
            <person name="Ravichandran K.S."/>
            <person name="Tonks N.K."/>
        </authorList>
    </citation>
    <scope>PHOSPHORYLATION</scope>
    <scope>DEPHOSPHORYLATION BY PTPN2</scope>
    <scope>MUTAGENESIS OF TYR-349 AND TYR-427</scope>
    <scope>INTERACTION WITH GRB2</scope>
</reference>
<reference key="23">
    <citation type="journal article" date="1998" name="Mol. Cell. Biol.">
        <title>Multiple Grb2-mediated integrin-stimulated signaling pathways to ERK2/mitogen-activated protein kinase: summation of both c-Src- and focal adhesion kinase-initiated tyrosine phosphorylation events.</title>
        <authorList>
            <person name="Schlaepfer D.D."/>
            <person name="Jones K.C."/>
            <person name="Hunter T."/>
        </authorList>
    </citation>
    <scope>PHOSPHORYLATION AT TYR-349; TYR-350 AND TYR-427</scope>
</reference>
<reference key="24">
    <citation type="journal article" date="1999" name="Blood">
        <title>A novel SH2-containing phosphatidylinositol 3,4,5-trisphosphate 5-phosphatase (SHIP2) is constitutively tyrosine phosphorylated and associated with src homologous and collagen gene (SHC) in chronic myelogenous leukemia progenitor cells.</title>
        <authorList>
            <person name="Wisniewski D."/>
            <person name="Strife A."/>
            <person name="Swendeman S."/>
            <person name="Erdjument-Bromage H."/>
            <person name="Geromanos S."/>
            <person name="Kavanaugh W.M."/>
            <person name="Tempst P."/>
            <person name="Clarkson B."/>
        </authorList>
    </citation>
    <scope>INTERACTION WITH INPPL1</scope>
</reference>
<reference key="25">
    <citation type="journal article" date="2000" name="J. Biol. Chem.">
        <title>Ligand discrimination in signaling through an ErbB4 receptor homodimer.</title>
        <authorList>
            <person name="Sweeney C."/>
            <person name="Lai C."/>
            <person name="Riese D.J. II"/>
            <person name="Diamonti A.J."/>
            <person name="Cantley L.C."/>
            <person name="Carraway K.L. III"/>
        </authorList>
    </citation>
    <scope>INTERACTION WITH ERBB4</scope>
</reference>
<reference key="26">
    <citation type="journal article" date="2001" name="J. Biol. Chem.">
        <title>The Src homology 2 domain containing inositol 5-phosphatase SHIP2 is recruited to the epidermal growth factor (EGF) receptor and dephosphorylates phosphatidylinositol 3,4,5-trisphosphate in EGF-stimulated COS-7 cells.</title>
        <authorList>
            <person name="Pesesse X."/>
            <person name="Dewaste V."/>
            <person name="De Smedt F."/>
            <person name="Laffargue M."/>
            <person name="Giuriato S."/>
            <person name="Moreau C."/>
            <person name="Payrastre B."/>
            <person name="Erneux C."/>
        </authorList>
    </citation>
    <scope>INTERACTION WITH INPPL1</scope>
</reference>
<reference key="27">
    <citation type="journal article" date="2002" name="Cancer Res.">
        <title>Focal adhesion kinase enhances signaling through the Shc/extracellular signal-regulated kinase pathway in anaplastic astrocytoma tumor biopsy samples.</title>
        <authorList>
            <person name="Hecker T.P."/>
            <person name="Grammer J.R."/>
            <person name="Gillespie G.Y."/>
            <person name="Stewart J. Jr."/>
            <person name="Gladson C.L."/>
        </authorList>
    </citation>
    <scope>INTERACTION WITH PTK2/FAK1</scope>
    <scope>PHOSPHORYLATION</scope>
</reference>
<reference key="28">
    <citation type="journal article" date="2002" name="J. Biol. Chem.">
        <title>The p66Shc longevity gene is silenced through epigenetic modifications of an alternative promoter.</title>
        <authorList>
            <person name="Ventura A."/>
            <person name="Luzi L."/>
            <person name="Pacini S."/>
            <person name="Baldari C.T."/>
            <person name="Pelicci P.-G."/>
        </authorList>
    </citation>
    <scope>ALTERNATIVE PROMOTER USAGE</scope>
</reference>
<reference key="29">
    <citation type="journal article" date="2003" name="J. Cell Biol.">
        <title>EphB1 recruits c-Src and p52Shc to activate MAPK/ERK and promote chemotaxis.</title>
        <authorList>
            <person name="Vindis C."/>
            <person name="Cerretti D.P."/>
            <person name="Daniel T.O."/>
            <person name="Huynh-Do U."/>
        </authorList>
    </citation>
    <scope>INTERACTION WITH EPHB1 AND GRB2</scope>
</reference>
<reference key="30">
    <citation type="journal article" date="2004" name="Cancer Cell">
        <title>TrkA alternative splicing: a regulated tumor-promoting switch in human neuroblastoma.</title>
        <authorList>
            <person name="Tacconelli A."/>
            <person name="Farina A.R."/>
            <person name="Cappabianca L."/>
            <person name="Desantis G."/>
            <person name="Tessitore A."/>
            <person name="Vetuschi A."/>
            <person name="Sferra R."/>
            <person name="Rucci N."/>
            <person name="Argenti B."/>
            <person name="Screpanti I."/>
            <person name="Gulino A."/>
            <person name="Mackay A.R."/>
        </authorList>
    </citation>
    <scope>INTERACTION WITH NTRK1</scope>
</reference>
<reference key="31">
    <citation type="journal article" date="2004" name="Cell. Mol. Life Sci.">
        <title>Signal transduction via the stem cell factor receptor/c-Kit.</title>
        <authorList>
            <person name="Ronnstrand L."/>
        </authorList>
    </citation>
    <scope>REVIEW ON ROLE IN KIT SIGNALING</scope>
    <scope>PHOSPHORYLATION</scope>
</reference>
<reference key="32">
    <citation type="journal article" date="2004" name="J. Biol. Chem.">
        <title>Adaptor ShcA protein binds tyrosine kinase Tie2 receptor and regulates migration and sprouting but not survival of endothelial cells.</title>
        <authorList>
            <person name="Audero E."/>
            <person name="Cascone I."/>
            <person name="Maniero F."/>
            <person name="Napione L."/>
            <person name="Arese M."/>
            <person name="Lanfrancone L."/>
            <person name="Bussolino F."/>
        </authorList>
    </citation>
    <scope>FUNCTION</scope>
    <scope>PHOSPHORYLATION</scope>
    <scope>INTERACTION WITH TEK</scope>
</reference>
<reference key="33">
    <citation type="journal article" date="2004" name="J. Biol. Chem.">
        <title>Activation of vascular endothelial growth factor receptor-3 and its downstream signaling promote cell survival under oxidative stress.</title>
        <authorList>
            <person name="Wang J.F."/>
            <person name="Zhang X."/>
            <person name="Groopman J.E."/>
        </authorList>
    </citation>
    <scope>INTERACTION WITH FLT4</scope>
</reference>
<reference key="34">
    <citation type="journal article" date="2004" name="J. Biol. Chem.">
        <title>Tyrosine phosphoproteomics of fibroblast growth factor signaling: a role for insulin receptor substrate-4.</title>
        <authorList>
            <person name="Hinsby A.M."/>
            <person name="Olsen J.V."/>
            <person name="Mann M."/>
        </authorList>
    </citation>
    <scope>INTERACTION WITH IRS4</scope>
</reference>
<reference key="35">
    <citation type="journal article" date="2004" name="J. Biol. Chem.">
        <title>A cryptic targeting signal induces isoform-specific localization of p46Shc to mitochondria.</title>
        <authorList>
            <person name="Ventura A."/>
            <person name="Maccarana M."/>
            <person name="Raker V.A."/>
            <person name="Pelicci P.-G."/>
        </authorList>
    </citation>
    <scope>SUBCELLULAR LOCATION (ISOFORM P46SHC)</scope>
</reference>
<reference key="36">
    <citation type="journal article" date="2004" name="J. Biol. Chem.">
        <title>Serine and threonine phosphorylation of the low density lipoprotein receptor-related protein by protein kinase Calpha regulates endocytosis and association with adaptor molecules.</title>
        <authorList>
            <person name="Ranganathan S."/>
            <person name="Liu C.-X."/>
            <person name="Migliorini M.M."/>
            <person name="Von Arnim C.A.F."/>
            <person name="Peltan I.D."/>
            <person name="Mikhailenko I."/>
            <person name="Hyman B.T."/>
            <person name="Strickland D.K."/>
        </authorList>
    </citation>
    <scope>INTERACTION WITH LRP1</scope>
</reference>
<reference key="37">
    <citation type="journal article" date="2005" name="J. Cell Biol.">
        <title>Phosphorylation of p66Shc and forkhead proteins mediates Abeta toxicity.</title>
        <authorList>
            <person name="Smith W.W."/>
            <person name="Norton D.D."/>
            <person name="Gorospe M."/>
            <person name="Jiang H."/>
            <person name="Nemoto S."/>
            <person name="Holbrook N.J."/>
            <person name="Finkel T."/>
            <person name="Kusiak J.W."/>
        </authorList>
    </citation>
    <scope>PHOSPHORYLATION AT SER-36</scope>
</reference>
<reference key="38">
    <citation type="journal article" date="2005" name="Nat. Biotechnol.">
        <title>Immunoaffinity profiling of tyrosine phosphorylation in cancer cells.</title>
        <authorList>
            <person name="Rush J."/>
            <person name="Moritz A."/>
            <person name="Lee K.A."/>
            <person name="Guo A."/>
            <person name="Goss V.L."/>
            <person name="Spek E.J."/>
            <person name="Zhang H."/>
            <person name="Zha X.-M."/>
            <person name="Polakiewicz R.D."/>
            <person name="Comb M.J."/>
        </authorList>
    </citation>
    <scope>IDENTIFICATION BY MASS SPECTROMETRY [LARGE SCALE ANALYSIS]</scope>
</reference>
<reference key="39">
    <citation type="journal article" date="2006" name="Cell">
        <title>Global, in vivo, and site-specific phosphorylation dynamics in signaling networks.</title>
        <authorList>
            <person name="Olsen J.V."/>
            <person name="Blagoev B."/>
            <person name="Gnad F."/>
            <person name="Macek B."/>
            <person name="Kumar C."/>
            <person name="Mortensen P."/>
            <person name="Mann M."/>
        </authorList>
    </citation>
    <scope>PHOSPHORYLATION [LARGE SCALE ANALYSIS] AT SER-139</scope>
    <scope>IDENTIFICATION BY MASS SPECTROMETRY [LARGE SCALE ANALYSIS]</scope>
    <source>
        <tissue>Cervix carcinoma</tissue>
    </source>
</reference>
<reference key="40">
    <citation type="journal article" date="2007" name="FEBS Lett.">
        <title>ALK activation induces Shc and FRS2 recruitment: Signaling and phenotypic outcomes in PC12 cells differentiation.</title>
        <authorList>
            <person name="Degoutin J."/>
            <person name="Vigny M."/>
            <person name="Gouzi J.Y."/>
        </authorList>
    </citation>
    <scope>INTERACTION WITH ALK</scope>
    <scope>PHOSPHORYLATION</scope>
</reference>
<reference key="41">
    <citation type="journal article" date="2008" name="EMBO J.">
        <title>Phosphorylation-dependent binding of 14-3-3 terminates signalling by the Gab2 docking protein.</title>
        <authorList>
            <person name="Brummer T."/>
            <person name="Larance M."/>
            <person name="Herrera Abreu M.T."/>
            <person name="Lyons R.J."/>
            <person name="Timpson P."/>
            <person name="Emmerich C.H."/>
            <person name="Fleuren E.D.G."/>
            <person name="Lehrbach G.M."/>
            <person name="Schramek D."/>
            <person name="Guilhaus M."/>
            <person name="James D.E."/>
            <person name="Daly R.J."/>
        </authorList>
    </citation>
    <scope>INTERACTION WITH GAB2</scope>
</reference>
<reference key="42">
    <citation type="journal article" date="2008" name="Proc. Natl. Acad. Sci. U.S.A.">
        <title>A quantitative atlas of mitotic phosphorylation.</title>
        <authorList>
            <person name="Dephoure N."/>
            <person name="Zhou C."/>
            <person name="Villen J."/>
            <person name="Beausoleil S.A."/>
            <person name="Bakalarski C.E."/>
            <person name="Elledge S.J."/>
            <person name="Gygi S.P."/>
        </authorList>
    </citation>
    <scope>PHOSPHORYLATION [LARGE SCALE ANALYSIS] AT SER-139 AND TYR-427</scope>
    <scope>IDENTIFICATION BY MASS SPECTROMETRY [LARGE SCALE ANALYSIS]</scope>
    <source>
        <tissue>Cervix carcinoma</tissue>
    </source>
</reference>
<reference key="43">
    <citation type="journal article" date="2009" name="Mol. Cell. Proteomics">
        <title>Large-scale proteomics analysis of the human kinome.</title>
        <authorList>
            <person name="Oppermann F.S."/>
            <person name="Gnad F."/>
            <person name="Olsen J.V."/>
            <person name="Hornberger R."/>
            <person name="Greff Z."/>
            <person name="Keri G."/>
            <person name="Mann M."/>
            <person name="Daub H."/>
        </authorList>
    </citation>
    <scope>IDENTIFICATION BY MASS SPECTROMETRY [LARGE SCALE ANALYSIS]</scope>
</reference>
<reference key="44">
    <citation type="journal article" date="2009" name="Sci. Signal.">
        <title>Quantitative phosphoproteomic analysis of T cell receptor signaling reveals system-wide modulation of protein-protein interactions.</title>
        <authorList>
            <person name="Mayya V."/>
            <person name="Lundgren D.H."/>
            <person name="Hwang S.-I."/>
            <person name="Rezaul K."/>
            <person name="Wu L."/>
            <person name="Eng J.K."/>
            <person name="Rodionov V."/>
            <person name="Han D.K."/>
        </authorList>
    </citation>
    <scope>PHOSPHORYLATION [LARGE SCALE ANALYSIS] AT TYR-427</scope>
    <scope>IDENTIFICATION BY MASS SPECTROMETRY [LARGE SCALE ANALYSIS]</scope>
    <source>
        <tissue>Leukemic T-cell</tissue>
    </source>
</reference>
<reference key="45">
    <citation type="journal article" date="2010" name="Oncogene">
        <title>Copine-III interacts with ErbB2 and promotes tumor cell migration.</title>
        <authorList>
            <person name="Heinrich C."/>
            <person name="Keller C."/>
            <person name="Boulay A."/>
            <person name="Vecchi M."/>
            <person name="Bianchi M."/>
            <person name="Sack R."/>
            <person name="Lienhard S."/>
            <person name="Duss S."/>
            <person name="Hofsteenge J."/>
            <person name="Hynes N.E."/>
        </authorList>
    </citation>
    <scope>INTERACTION WITH CPNE3</scope>
</reference>
<reference key="46">
    <citation type="journal article" date="2010" name="Sci. Signal.">
        <title>Quantitative phosphoproteomics reveals widespread full phosphorylation site occupancy during mitosis.</title>
        <authorList>
            <person name="Olsen J.V."/>
            <person name="Vermeulen M."/>
            <person name="Santamaria A."/>
            <person name="Kumar C."/>
            <person name="Miller M.L."/>
            <person name="Jensen L.J."/>
            <person name="Gnad F."/>
            <person name="Cox J."/>
            <person name="Jensen T.S."/>
            <person name="Nigg E.A."/>
            <person name="Brunak S."/>
            <person name="Mann M."/>
        </authorList>
    </citation>
    <scope>IDENTIFICATION BY MASS SPECTROMETRY [LARGE SCALE ANALYSIS]</scope>
    <source>
        <tissue>Cervix carcinoma</tissue>
    </source>
</reference>
<reference key="47">
    <citation type="journal article" date="2011" name="BMC Syst. Biol.">
        <title>Initial characterization of the human central proteome.</title>
        <authorList>
            <person name="Burkard T.R."/>
            <person name="Planyavsky M."/>
            <person name="Kaupe I."/>
            <person name="Breitwieser F.P."/>
            <person name="Buerckstuemmer T."/>
            <person name="Bennett K.L."/>
            <person name="Superti-Furga G."/>
            <person name="Colinge J."/>
        </authorList>
    </citation>
    <scope>IDENTIFICATION BY MASS SPECTROMETRY [LARGE SCALE ANALYSIS]</scope>
</reference>
<reference key="48">
    <citation type="journal article" date="2011" name="Sci. Signal.">
        <title>System-wide temporal characterization of the proteome and phosphoproteome of human embryonic stem cell differentiation.</title>
        <authorList>
            <person name="Rigbolt K.T."/>
            <person name="Prokhorova T.A."/>
            <person name="Akimov V."/>
            <person name="Henningsen J."/>
            <person name="Johansen P.T."/>
            <person name="Kratchmarova I."/>
            <person name="Kassem M."/>
            <person name="Mann M."/>
            <person name="Olsen J.V."/>
            <person name="Blagoev B."/>
        </authorList>
    </citation>
    <scope>PHOSPHORYLATION [LARGE SCALE ANALYSIS] AT SER-139</scope>
    <scope>IDENTIFICATION BY MASS SPECTROMETRY [LARGE SCALE ANALYSIS]</scope>
</reference>
<reference key="49">
    <citation type="journal article" date="2012" name="Proc. Natl. Acad. Sci. U.S.A.">
        <title>N-terminal acetylome analyses and functional insights of the N-terminal acetyltransferase NatB.</title>
        <authorList>
            <person name="Van Damme P."/>
            <person name="Lasa M."/>
            <person name="Polevoda B."/>
            <person name="Gazquez C."/>
            <person name="Elosegui-Artola A."/>
            <person name="Kim D.S."/>
            <person name="De Juan-Pardo E."/>
            <person name="Demeyer K."/>
            <person name="Hole K."/>
            <person name="Larrea E."/>
            <person name="Timmerman E."/>
            <person name="Prieto J."/>
            <person name="Arnesen T."/>
            <person name="Sherman F."/>
            <person name="Gevaert K."/>
            <person name="Aldabe R."/>
        </authorList>
    </citation>
    <scope>ACETYLATION [LARGE SCALE ANALYSIS] AT MET-1</scope>
    <scope>ACETYLATION [LARGE SCALE ANALYSIS] AT MET-1 (ISOFORMS 7 AND P52SHC)</scope>
    <scope>IDENTIFICATION BY MASS SPECTROMETRY [LARGE SCALE ANALYSIS]</scope>
</reference>
<reference key="50">
    <citation type="journal article" date="2013" name="J. Proteome Res.">
        <title>Toward a comprehensive characterization of a human cancer cell phosphoproteome.</title>
        <authorList>
            <person name="Zhou H."/>
            <person name="Di Palma S."/>
            <person name="Preisinger C."/>
            <person name="Peng M."/>
            <person name="Polat A.N."/>
            <person name="Heck A.J."/>
            <person name="Mohammed S."/>
        </authorList>
    </citation>
    <scope>PHOSPHORYLATION [LARGE SCALE ANALYSIS] AT SER-139; TYR-427 AND SER-453</scope>
    <scope>IDENTIFICATION BY MASS SPECTROMETRY [LARGE SCALE ANALYSIS]</scope>
    <source>
        <tissue>Cervix carcinoma</tissue>
        <tissue>Erythroleukemia</tissue>
    </source>
</reference>
<reference key="51">
    <citation type="journal article" date="2013" name="J. Virol.">
        <title>Role of herpes simplex virus VP11/12 tyrosine-based motifs in binding and activation of the Src family kinase Lck and recruitment of p85, Grb2, and Shc.</title>
        <authorList>
            <person name="Strunk U."/>
            <person name="Saffran H.A."/>
            <person name="Wu F.W."/>
            <person name="Smiley J.R."/>
        </authorList>
    </citation>
    <scope>INTERACTION WITH HERPES SIMPLEX VIRUS 1 UL46 (MICROBIAL INFECTION)</scope>
</reference>
<reference key="52">
    <citation type="journal article" date="2013" name="Nature">
        <title>Temporal regulation of EGF signalling networks by the scaffold protein Shc1.</title>
        <authorList>
            <person name="Zheng Y."/>
            <person name="Zhang C."/>
            <person name="Croucher D.R."/>
            <person name="Soliman M.A."/>
            <person name="St-Denis N."/>
            <person name="Pasculescu A."/>
            <person name="Taylor L."/>
            <person name="Tate S.A."/>
            <person name="Hardy W.R."/>
            <person name="Colwill K."/>
            <person name="Dai A.Y."/>
            <person name="Bagshaw R."/>
            <person name="Dennis J.W."/>
            <person name="Gingras A.C."/>
            <person name="Daly R.J."/>
            <person name="Pawson T."/>
        </authorList>
    </citation>
    <scope>INTERACTION WITH PEAK1</scope>
    <scope>INTERACTION WITH PPP1CA</scope>
    <scope>PPP1CC AND PEAK1</scope>
    <scope>IDENTIFICATION BY MASS SPECTROMETRY</scope>
</reference>
<reference key="53">
    <citation type="journal article" date="2014" name="J. Proteomics">
        <title>An enzyme assisted RP-RPLC approach for in-depth analysis of human liver phosphoproteome.</title>
        <authorList>
            <person name="Bian Y."/>
            <person name="Song C."/>
            <person name="Cheng K."/>
            <person name="Dong M."/>
            <person name="Wang F."/>
            <person name="Huang J."/>
            <person name="Sun D."/>
            <person name="Wang L."/>
            <person name="Ye M."/>
            <person name="Zou H."/>
        </authorList>
    </citation>
    <scope>PHOSPHORYLATION [LARGE SCALE ANALYSIS] AT SER-139</scope>
    <scope>IDENTIFICATION BY MASS SPECTROMETRY [LARGE SCALE ANALYSIS]</scope>
    <source>
        <tissue>Liver</tissue>
    </source>
</reference>
<reference key="54">
    <citation type="journal article" date="2022" name="J. Cell Biol.">
        <title>PEAK1 Y635 phosphorylation regulates cell migration through association with Tensin3 and integrins.</title>
        <authorList>
            <person name="Zuidema A."/>
            <person name="Atherton P."/>
            <person name="Kreft M."/>
            <person name="Hoekman L."/>
            <person name="Bleijerveld O.B."/>
            <person name="Nagaraj N."/>
            <person name="Chen N."/>
            <person name="Faessler R."/>
            <person name="Sonnenberg A."/>
        </authorList>
    </citation>
    <scope>INTERACTION WITH PEAK1</scope>
    <scope>SUBCELLULAR LOCATION</scope>
</reference>
<reference key="55">
    <citation type="journal article" date="1995" name="J. Mol. Biol.">
        <title>Crystal structure of the SH2 domain from the adaptor protein SHC: a model for peptide binding based on X-ray and NMR data.</title>
        <authorList>
            <person name="Mikol V."/>
            <person name="Baumann G."/>
            <person name="Zurini M.G.M."/>
            <person name="Hommel U."/>
        </authorList>
    </citation>
    <scope>X-RAY CRYSTALLOGRAPHY (2.7 ANGSTROMS) OF 482-583</scope>
</reference>
<reference key="56">
    <citation type="journal article" date="1995" name="Nature">
        <title>Structure and ligand recognition of the phosphotyrosine binding domain of Shc.</title>
        <authorList>
            <person name="Zhou M.-M."/>
            <person name="Ravichandran K.S."/>
            <person name="Olejniczak E.F."/>
            <person name="Petros A.M."/>
            <person name="Meadows R.P."/>
            <person name="Sattler M."/>
            <person name="Harlan J.E."/>
            <person name="Wade W.S."/>
            <person name="Burakoff S.J."/>
            <person name="Fesik S.W."/>
        </authorList>
    </citation>
    <scope>STRUCTURE BY NMR OF 127-317</scope>
</reference>
<reference key="57">
    <citation type="journal article" date="1995" name="Proc. Natl. Acad. Sci. U.S.A.">
        <title>Solution structure of the Shc SH2 domain complexed with a tyrosine-phosphorylated peptide from the T-cell receptor.</title>
        <authorList>
            <person name="Zhou M.-M."/>
            <person name="Meadows R.P."/>
            <person name="Logan T.M."/>
            <person name="Yoon H.S."/>
            <person name="Wade W.S."/>
            <person name="Ravichandran K.S."/>
            <person name="Burakoff S.J."/>
            <person name="Fesik S.W."/>
        </authorList>
    </citation>
    <scope>STRUCTURE BY NMR OF 480-583 IN COMPLEX WITH TYROSINE-PHOSPHORYLATED CD3Z</scope>
</reference>
<feature type="chain" id="PRO_0000097731" description="SHC-transforming protein 1">
    <location>
        <begin position="1"/>
        <end position="583"/>
    </location>
</feature>
<feature type="domain" description="PID" evidence="4">
    <location>
        <begin position="156"/>
        <end position="339"/>
    </location>
</feature>
<feature type="domain" description="SH2" evidence="5">
    <location>
        <begin position="488"/>
        <end position="579"/>
    </location>
</feature>
<feature type="region of interest" description="Disordered" evidence="6">
    <location>
        <begin position="1"/>
        <end position="92"/>
    </location>
</feature>
<feature type="region of interest" description="CH1">
    <location>
        <begin position="340"/>
        <end position="487"/>
    </location>
</feature>
<feature type="region of interest" description="Disordered" evidence="6">
    <location>
        <begin position="372"/>
        <end position="415"/>
    </location>
</feature>
<feature type="compositionally biased region" description="Low complexity" evidence="6">
    <location>
        <begin position="16"/>
        <end position="44"/>
    </location>
</feature>
<feature type="compositionally biased region" description="Low complexity" evidence="6">
    <location>
        <begin position="372"/>
        <end position="384"/>
    </location>
</feature>
<feature type="modified residue" description="N-acetylmethionine" evidence="51">
    <location>
        <position position="1"/>
    </location>
</feature>
<feature type="modified residue" description="Phosphoserine" evidence="19">
    <location>
        <position position="36"/>
    </location>
</feature>
<feature type="modified residue" description="Phosphoserine" evidence="47 48 50 52 53">
    <location>
        <position position="139"/>
    </location>
</feature>
<feature type="modified residue" description="N6-acetyllysine" evidence="2">
    <location>
        <position position="154"/>
    </location>
</feature>
<feature type="modified residue" description="Phosphotyrosine" evidence="33 36 40">
    <location>
        <position position="349"/>
    </location>
</feature>
<feature type="modified residue" description="Phosphotyrosine" evidence="33 36 40">
    <location>
        <position position="350"/>
    </location>
</feature>
<feature type="modified residue" description="Phosphotyrosine" evidence="36 40 48 49 52">
    <location>
        <position position="427"/>
    </location>
</feature>
<feature type="modified residue" description="Phosphoserine" evidence="52">
    <location>
        <position position="453"/>
    </location>
</feature>
<feature type="splice variant" id="VSP_040090" description="In isoform 5." evidence="46">
    <location>
        <begin position="1"/>
        <end position="214"/>
    </location>
</feature>
<feature type="splice variant" id="VSP_016107" description="In isoform p46Shc." evidence="44">
    <location>
        <begin position="1"/>
        <end position="155"/>
    </location>
</feature>
<feature type="splice variant" id="VSP_016108" description="In isoform p52Shc and isoform 7." evidence="42 43 44">
    <location>
        <begin position="1"/>
        <end position="110"/>
    </location>
</feature>
<feature type="splice variant" id="VSP_040091" description="In isoform 5." evidence="46">
    <original>PLSSILG</original>
    <variation>MSLCHRW</variation>
    <location>
        <begin position="215"/>
        <end position="221"/>
    </location>
</feature>
<feature type="splice variant" id="VSP_040092" description="In isoform 7 and isoform 6." evidence="43 45">
    <original>P</original>
    <variation>PA</variation>
    <location>
        <position position="417"/>
    </location>
</feature>
<feature type="sequence variant" id="VAR_042428" description="In dbSNP:rs8191981.">
    <original>A</original>
    <variation>V</variation>
    <location>
        <position position="205"/>
    </location>
</feature>
<feature type="sequence variant" id="VAR_051353" description="In dbSNP:rs8191979.">
    <original>M</original>
    <variation>V</variation>
    <location>
        <position position="410"/>
    </location>
</feature>
<feature type="mutagenesis site" description="Alters interaction with GRB2; isoform p52Shc (in vitro)." evidence="39">
    <original>Y</original>
    <variation>F</variation>
    <location>
        <position position="349"/>
    </location>
</feature>
<feature type="mutagenesis site" description="No effect on interaction with GRB2; isoform p52Shc (in vitro)." evidence="39">
    <original>Y</original>
    <variation>F</variation>
    <location>
        <position position="427"/>
    </location>
</feature>
<feature type="sequence conflict" description="In Ref. 3; CAA70977." evidence="46" ref="3">
    <original>D</original>
    <variation>N</variation>
    <location>
        <position position="2"/>
    </location>
</feature>
<feature type="sequence conflict" description="In Ref. 3; CAA70977." evidence="46" ref="3">
    <original>L</original>
    <variation>M</variation>
    <location>
        <position position="21"/>
    </location>
</feature>
<feature type="sequence conflict" description="In Ref. 3; CAA70977." evidence="46" ref="3">
    <original>S</original>
    <variation>P</variation>
    <location>
        <position position="38"/>
    </location>
</feature>
<feature type="sequence conflict" description="In Ref. 2; AAB49972." evidence="46" ref="2">
    <original>V</original>
    <variation>D</variation>
    <location>
        <position position="95"/>
    </location>
</feature>
<feature type="sequence conflict" description="In Ref. 2; AAB49972." evidence="46" ref="2">
    <original>D</original>
    <variation>E</variation>
    <location>
        <position position="101"/>
    </location>
</feature>
<feature type="sequence conflict" description="In Ref. 5; BAG70069/BAG70193." evidence="46" ref="5">
    <original>V</original>
    <variation>A</variation>
    <location>
        <position position="430"/>
    </location>
</feature>
<feature type="strand" evidence="55">
    <location>
        <begin position="113"/>
        <end position="115"/>
    </location>
</feature>
<feature type="strand" evidence="57">
    <location>
        <begin position="142"/>
        <end position="145"/>
    </location>
</feature>
<feature type="strand" evidence="55">
    <location>
        <begin position="148"/>
        <end position="150"/>
    </location>
</feature>
<feature type="helix" evidence="59">
    <location>
        <begin position="152"/>
        <end position="156"/>
    </location>
</feature>
<feature type="strand" evidence="59">
    <location>
        <begin position="160"/>
        <end position="172"/>
    </location>
</feature>
<feature type="helix" evidence="59">
    <location>
        <begin position="176"/>
        <end position="178"/>
    </location>
</feature>
<feature type="helix" evidence="59">
    <location>
        <begin position="181"/>
        <end position="198"/>
    </location>
</feature>
<feature type="helix" evidence="56">
    <location>
        <begin position="200"/>
        <end position="202"/>
    </location>
</feature>
<feature type="strand" evidence="57">
    <location>
        <begin position="206"/>
        <end position="208"/>
    </location>
</feature>
<feature type="turn" evidence="59">
    <location>
        <begin position="215"/>
        <end position="219"/>
    </location>
</feature>
<feature type="strand" evidence="59">
    <location>
        <begin position="220"/>
        <end position="224"/>
    </location>
</feature>
<feature type="turn" evidence="59">
    <location>
        <begin position="226"/>
        <end position="229"/>
    </location>
</feature>
<feature type="strand" evidence="59">
    <location>
        <begin position="230"/>
        <end position="236"/>
    </location>
</feature>
<feature type="strand" evidence="59">
    <location>
        <begin position="238"/>
        <end position="245"/>
    </location>
</feature>
<feature type="turn" evidence="55">
    <location>
        <begin position="246"/>
        <end position="249"/>
    </location>
</feature>
<feature type="strand" evidence="59">
    <location>
        <begin position="251"/>
        <end position="256"/>
    </location>
</feature>
<feature type="helix" evidence="59">
    <location>
        <begin position="257"/>
        <end position="259"/>
    </location>
</feature>
<feature type="strand" evidence="59">
    <location>
        <begin position="262"/>
        <end position="265"/>
    </location>
</feature>
<feature type="helix" evidence="59">
    <location>
        <begin position="268"/>
        <end position="270"/>
    </location>
</feature>
<feature type="strand" evidence="59">
    <location>
        <begin position="273"/>
        <end position="280"/>
    </location>
</feature>
<feature type="turn" evidence="59">
    <location>
        <begin position="281"/>
        <end position="283"/>
    </location>
</feature>
<feature type="strand" evidence="59">
    <location>
        <begin position="284"/>
        <end position="291"/>
    </location>
</feature>
<feature type="strand" evidence="55">
    <location>
        <begin position="293"/>
        <end position="295"/>
    </location>
</feature>
<feature type="helix" evidence="59">
    <location>
        <begin position="296"/>
        <end position="310"/>
    </location>
</feature>
<feature type="strand" evidence="55">
    <location>
        <begin position="311"/>
        <end position="314"/>
    </location>
</feature>
<feature type="strand" evidence="60">
    <location>
        <begin position="350"/>
        <end position="352"/>
    </location>
</feature>
<feature type="turn" evidence="54">
    <location>
        <begin position="483"/>
        <end position="485"/>
    </location>
</feature>
<feature type="strand" evidence="58">
    <location>
        <begin position="487"/>
        <end position="489"/>
    </location>
</feature>
<feature type="helix" evidence="54">
    <location>
        <begin position="495"/>
        <end position="499"/>
    </location>
</feature>
<feature type="strand" evidence="54">
    <location>
        <begin position="507"/>
        <end position="512"/>
    </location>
</feature>
<feature type="strand" evidence="58">
    <location>
        <begin position="514"/>
        <end position="516"/>
    </location>
</feature>
<feature type="strand" evidence="54">
    <location>
        <begin position="518"/>
        <end position="526"/>
    </location>
</feature>
<feature type="strand" evidence="54">
    <location>
        <begin position="529"/>
        <end position="536"/>
    </location>
</feature>
<feature type="strand" evidence="54">
    <location>
        <begin position="540"/>
        <end position="543"/>
    </location>
</feature>
<feature type="strand" evidence="54">
    <location>
        <begin position="548"/>
        <end position="551"/>
    </location>
</feature>
<feature type="helix" evidence="54">
    <location>
        <begin position="552"/>
        <end position="562"/>
    </location>
</feature>
<feature type="strand" evidence="54">
    <location>
        <begin position="566"/>
        <end position="568"/>
    </location>
</feature>
<feature type="strand" evidence="54">
    <location>
        <begin position="571"/>
        <end position="573"/>
    </location>
</feature>
<feature type="modified residue" description="N-acetylmethionine" evidence="51">
    <location sequence="P29353-2">
        <position position="1"/>
    </location>
</feature>
<feature type="modified residue" description="N-acetylmethionine" evidence="51">
    <location sequence="P29353-7">
        <position position="1"/>
    </location>
</feature>
<protein>
    <recommendedName>
        <fullName>SHC-transforming protein 1</fullName>
    </recommendedName>
    <alternativeName>
        <fullName>SHC-transforming protein 3</fullName>
    </alternativeName>
    <alternativeName>
        <fullName>SHC-transforming protein A</fullName>
    </alternativeName>
    <alternativeName>
        <fullName>Src homology 2 domain-containing-transforming protein C1</fullName>
        <shortName>SH2 domain protein C1</shortName>
    </alternativeName>
</protein>
<name>SHC1_HUMAN</name>